<name>BANP_HUMAN</name>
<keyword id="KW-0002">3D-structure</keyword>
<keyword id="KW-0007">Acetylation</keyword>
<keyword id="KW-0025">Alternative splicing</keyword>
<keyword id="KW-0131">Cell cycle</keyword>
<keyword id="KW-0156">Chromatin regulator</keyword>
<keyword id="KW-0175">Coiled coil</keyword>
<keyword id="KW-0963">Cytoplasm</keyword>
<keyword id="KW-0217">Developmental protein</keyword>
<keyword id="KW-0238">DNA-binding</keyword>
<keyword id="KW-1017">Isopeptide bond</keyword>
<keyword id="KW-0539">Nucleus</keyword>
<keyword id="KW-0597">Phosphoprotein</keyword>
<keyword id="KW-1267">Proteomics identification</keyword>
<keyword id="KW-1185">Reference proteome</keyword>
<keyword id="KW-0678">Repressor</keyword>
<keyword id="KW-0694">RNA-binding</keyword>
<keyword id="KW-0804">Transcription</keyword>
<keyword id="KW-0805">Transcription regulation</keyword>
<keyword id="KW-0043">Tumor suppressor</keyword>
<keyword id="KW-0832">Ubl conjugation</keyword>
<protein>
    <recommendedName>
        <fullName>Protein BANP</fullName>
    </recommendedName>
    <alternativeName>
        <fullName>BEN domain-containing protein 1</fullName>
    </alternativeName>
    <alternativeName>
        <fullName>Btg3-associated nuclear protein</fullName>
    </alternativeName>
    <alternativeName>
        <fullName>Scaffold/matrix-associated region-1-binding protein</fullName>
    </alternativeName>
</protein>
<proteinExistence type="evidence at protein level"/>
<feature type="chain" id="PRO_0000297910" description="Protein BANP">
    <location>
        <begin position="1"/>
        <end position="519"/>
    </location>
</feature>
<feature type="domain" description="BEN" evidence="4">
    <location>
        <begin position="226"/>
        <end position="322"/>
    </location>
</feature>
<feature type="region of interest" description="Interaction with CUX1 and HDAC1" evidence="1">
    <location>
        <begin position="152"/>
        <end position="342"/>
    </location>
</feature>
<feature type="region of interest" description="Disordered" evidence="5">
    <location>
        <begin position="168"/>
        <end position="196"/>
    </location>
</feature>
<feature type="region of interest" description="Disordered" evidence="5">
    <location>
        <begin position="327"/>
        <end position="364"/>
    </location>
</feature>
<feature type="region of interest" description="DNA-binding" evidence="1">
    <location>
        <begin position="342"/>
        <end position="393"/>
    </location>
</feature>
<feature type="coiled-coil region" evidence="3">
    <location>
        <begin position="53"/>
        <end position="90"/>
    </location>
</feature>
<feature type="compositionally biased region" description="Basic and acidic residues" evidence="5">
    <location>
        <begin position="168"/>
        <end position="177"/>
    </location>
</feature>
<feature type="compositionally biased region" description="Low complexity" evidence="5">
    <location>
        <begin position="180"/>
        <end position="189"/>
    </location>
</feature>
<feature type="compositionally biased region" description="Polar residues" evidence="5">
    <location>
        <begin position="335"/>
        <end position="344"/>
    </location>
</feature>
<feature type="compositionally biased region" description="Pro residues" evidence="5">
    <location>
        <begin position="351"/>
        <end position="364"/>
    </location>
</feature>
<feature type="modified residue" description="Phosphoserine" evidence="12">
    <location>
        <position position="19"/>
    </location>
</feature>
<feature type="modified residue" description="Phosphoserine" evidence="11">
    <location>
        <position position="90"/>
    </location>
</feature>
<feature type="modified residue" description="Phosphoserine" evidence="11">
    <location>
        <position position="100"/>
    </location>
</feature>
<feature type="modified residue" description="N6-acetyllysine" evidence="2">
    <location>
        <position position="275"/>
    </location>
</feature>
<feature type="modified residue" description="Phosphothreonine" evidence="2">
    <location>
        <position position="337"/>
    </location>
</feature>
<feature type="modified residue" description="Phosphothreonine" evidence="2">
    <location>
        <position position="352"/>
    </location>
</feature>
<feature type="cross-link" description="Glycyl lysine isopeptide (Lys-Gly) (interchain with G-Cter in SUMO2)" evidence="13">
    <location>
        <position position="133"/>
    </location>
</feature>
<feature type="splice variant" id="VSP_027396" description="In isoform 3." evidence="8">
    <location>
        <begin position="1"/>
        <end position="24"/>
    </location>
</feature>
<feature type="splice variant" id="VSP_043558" description="In isoform 5." evidence="8">
    <original>V</original>
    <variation>GTELWDI</variation>
    <location>
        <position position="24"/>
    </location>
</feature>
<feature type="splice variant" id="VSP_027398" description="In isoform 3." evidence="8">
    <original>VLENHVVTDEDE</original>
    <variation>MTREFVKRSIFL</variation>
    <location>
        <begin position="25"/>
        <end position="36"/>
    </location>
</feature>
<feature type="splice variant" id="VSP_027399" description="In isoform 2, isoform 3, isoform 4, isoform 5, isoform 6 and isoform 7." evidence="8 9">
    <original>K</original>
    <variation>KSFLYSINQ</variation>
    <location>
        <position position="54"/>
    </location>
</feature>
<feature type="splice variant" id="VSP_027400" description="In isoform 2, isoform 3, isoform 4, isoform 5 and isoform 6." evidence="8 9">
    <location>
        <begin position="114"/>
        <end position="152"/>
    </location>
</feature>
<feature type="splice variant" id="VSP_027401" description="In isoform 2, isoform 4, isoform 5 and isoform 7." evidence="8 9">
    <original>V</original>
    <variation>VIPQ</variation>
    <location>
        <position position="392"/>
    </location>
</feature>
<feature type="splice variant" id="VSP_027402" description="In isoform 2, isoform 3, isoform 6 and isoform 7." evidence="8 9">
    <location>
        <begin position="425"/>
        <end position="446"/>
    </location>
</feature>
<feature type="sequence conflict" description="In Ref. 1; AK315535." evidence="10" ref="1">
    <original>N</original>
    <variation>S</variation>
    <location>
        <position position="123"/>
    </location>
</feature>
<feature type="sequence conflict" description="In Ref. 1; BAA91244." evidence="10" ref="1">
    <original>P</original>
    <variation>S</variation>
    <location>
        <position position="338"/>
    </location>
</feature>
<feature type="helix" evidence="14">
    <location>
        <begin position="210"/>
        <end position="212"/>
    </location>
</feature>
<feature type="strand" evidence="14">
    <location>
        <begin position="216"/>
        <end position="220"/>
    </location>
</feature>
<feature type="strand" evidence="14">
    <location>
        <begin position="227"/>
        <end position="232"/>
    </location>
</feature>
<feature type="helix" evidence="14">
    <location>
        <begin position="235"/>
        <end position="244"/>
    </location>
</feature>
<feature type="helix" evidence="14">
    <location>
        <begin position="248"/>
        <end position="259"/>
    </location>
</feature>
<feature type="helix" evidence="14">
    <location>
        <begin position="262"/>
        <end position="266"/>
    </location>
</feature>
<feature type="strand" evidence="14">
    <location>
        <begin position="268"/>
        <end position="271"/>
    </location>
</feature>
<feature type="turn" evidence="15">
    <location>
        <begin position="275"/>
        <end position="277"/>
    </location>
</feature>
<feature type="helix" evidence="14">
    <location>
        <begin position="283"/>
        <end position="297"/>
    </location>
</feature>
<feature type="helix" evidence="14">
    <location>
        <begin position="301"/>
        <end position="321"/>
    </location>
</feature>
<organism>
    <name type="scientific">Homo sapiens</name>
    <name type="common">Human</name>
    <dbReference type="NCBI Taxonomy" id="9606"/>
    <lineage>
        <taxon>Eukaryota</taxon>
        <taxon>Metazoa</taxon>
        <taxon>Chordata</taxon>
        <taxon>Craniata</taxon>
        <taxon>Vertebrata</taxon>
        <taxon>Euteleostomi</taxon>
        <taxon>Mammalia</taxon>
        <taxon>Eutheria</taxon>
        <taxon>Euarchontoglires</taxon>
        <taxon>Primates</taxon>
        <taxon>Haplorrhini</taxon>
        <taxon>Catarrhini</taxon>
        <taxon>Hominidae</taxon>
        <taxon>Homo</taxon>
    </lineage>
</organism>
<accession>Q8N9N5</accession>
<accession>A8MU25</accession>
<accession>A8MX25</accession>
<accession>B2RCF7</accession>
<accession>B4DNJ9</accession>
<accession>F5GZM0</accession>
<accession>Q96GJ7</accession>
<accession>Q9NWY1</accession>
<gene>
    <name type="primary">BANP</name>
    <name type="synonym">BEND1</name>
    <name type="synonym">SMAR1</name>
</gene>
<reference key="1">
    <citation type="journal article" date="2004" name="Nat. Genet.">
        <title>Complete sequencing and characterization of 21,243 full-length human cDNAs.</title>
        <authorList>
            <person name="Ota T."/>
            <person name="Suzuki Y."/>
            <person name="Nishikawa T."/>
            <person name="Otsuki T."/>
            <person name="Sugiyama T."/>
            <person name="Irie R."/>
            <person name="Wakamatsu A."/>
            <person name="Hayashi K."/>
            <person name="Sato H."/>
            <person name="Nagai K."/>
            <person name="Kimura K."/>
            <person name="Makita H."/>
            <person name="Sekine M."/>
            <person name="Obayashi M."/>
            <person name="Nishi T."/>
            <person name="Shibahara T."/>
            <person name="Tanaka T."/>
            <person name="Ishii S."/>
            <person name="Yamamoto J."/>
            <person name="Saito K."/>
            <person name="Kawai Y."/>
            <person name="Isono Y."/>
            <person name="Nakamura Y."/>
            <person name="Nagahari K."/>
            <person name="Murakami K."/>
            <person name="Yasuda T."/>
            <person name="Iwayanagi T."/>
            <person name="Wagatsuma M."/>
            <person name="Shiratori A."/>
            <person name="Sudo H."/>
            <person name="Hosoiri T."/>
            <person name="Kaku Y."/>
            <person name="Kodaira H."/>
            <person name="Kondo H."/>
            <person name="Sugawara M."/>
            <person name="Takahashi M."/>
            <person name="Kanda K."/>
            <person name="Yokoi T."/>
            <person name="Furuya T."/>
            <person name="Kikkawa E."/>
            <person name="Omura Y."/>
            <person name="Abe K."/>
            <person name="Kamihara K."/>
            <person name="Katsuta N."/>
            <person name="Sato K."/>
            <person name="Tanikawa M."/>
            <person name="Yamazaki M."/>
            <person name="Ninomiya K."/>
            <person name="Ishibashi T."/>
            <person name="Yamashita H."/>
            <person name="Murakawa K."/>
            <person name="Fujimori K."/>
            <person name="Tanai H."/>
            <person name="Kimata M."/>
            <person name="Watanabe M."/>
            <person name="Hiraoka S."/>
            <person name="Chiba Y."/>
            <person name="Ishida S."/>
            <person name="Ono Y."/>
            <person name="Takiguchi S."/>
            <person name="Watanabe S."/>
            <person name="Yosida M."/>
            <person name="Hotuta T."/>
            <person name="Kusano J."/>
            <person name="Kanehori K."/>
            <person name="Takahashi-Fujii A."/>
            <person name="Hara H."/>
            <person name="Tanase T.-O."/>
            <person name="Nomura Y."/>
            <person name="Togiya S."/>
            <person name="Komai F."/>
            <person name="Hara R."/>
            <person name="Takeuchi K."/>
            <person name="Arita M."/>
            <person name="Imose N."/>
            <person name="Musashino K."/>
            <person name="Yuuki H."/>
            <person name="Oshima A."/>
            <person name="Sasaki N."/>
            <person name="Aotsuka S."/>
            <person name="Yoshikawa Y."/>
            <person name="Matsunawa H."/>
            <person name="Ichihara T."/>
            <person name="Shiohata N."/>
            <person name="Sano S."/>
            <person name="Moriya S."/>
            <person name="Momiyama H."/>
            <person name="Satoh N."/>
            <person name="Takami S."/>
            <person name="Terashima Y."/>
            <person name="Suzuki O."/>
            <person name="Nakagawa S."/>
            <person name="Senoh A."/>
            <person name="Mizoguchi H."/>
            <person name="Goto Y."/>
            <person name="Shimizu F."/>
            <person name="Wakebe H."/>
            <person name="Hishigaki H."/>
            <person name="Watanabe T."/>
            <person name="Sugiyama A."/>
            <person name="Takemoto M."/>
            <person name="Kawakami B."/>
            <person name="Yamazaki M."/>
            <person name="Watanabe K."/>
            <person name="Kumagai A."/>
            <person name="Itakura S."/>
            <person name="Fukuzumi Y."/>
            <person name="Fujimori Y."/>
            <person name="Komiyama M."/>
            <person name="Tashiro H."/>
            <person name="Tanigami A."/>
            <person name="Fujiwara T."/>
            <person name="Ono T."/>
            <person name="Yamada K."/>
            <person name="Fujii Y."/>
            <person name="Ozaki K."/>
            <person name="Hirao M."/>
            <person name="Ohmori Y."/>
            <person name="Kawabata A."/>
            <person name="Hikiji T."/>
            <person name="Kobatake N."/>
            <person name="Inagaki H."/>
            <person name="Ikema Y."/>
            <person name="Okamoto S."/>
            <person name="Okitani R."/>
            <person name="Kawakami T."/>
            <person name="Noguchi S."/>
            <person name="Itoh T."/>
            <person name="Shigeta K."/>
            <person name="Senba T."/>
            <person name="Matsumura K."/>
            <person name="Nakajima Y."/>
            <person name="Mizuno T."/>
            <person name="Morinaga M."/>
            <person name="Sasaki M."/>
            <person name="Togashi T."/>
            <person name="Oyama M."/>
            <person name="Hata H."/>
            <person name="Watanabe M."/>
            <person name="Komatsu T."/>
            <person name="Mizushima-Sugano J."/>
            <person name="Satoh T."/>
            <person name="Shirai Y."/>
            <person name="Takahashi Y."/>
            <person name="Nakagawa K."/>
            <person name="Okumura K."/>
            <person name="Nagase T."/>
            <person name="Nomura N."/>
            <person name="Kikuchi H."/>
            <person name="Masuho Y."/>
            <person name="Yamashita R."/>
            <person name="Nakai K."/>
            <person name="Yada T."/>
            <person name="Nakamura Y."/>
            <person name="Ohara O."/>
            <person name="Isogai T."/>
            <person name="Sugano S."/>
        </authorList>
    </citation>
    <scope>NUCLEOTIDE SEQUENCE [LARGE SCALE MRNA] (ISOFORMS 1; 3; 4; 5; 6 AND 7)</scope>
    <source>
        <tissue>Peripheral blood monocyte</tissue>
    </source>
</reference>
<reference key="2">
    <citation type="journal article" date="2004" name="Nature">
        <title>The sequence and analysis of duplication-rich human chromosome 16.</title>
        <authorList>
            <person name="Martin J."/>
            <person name="Han C."/>
            <person name="Gordon L.A."/>
            <person name="Terry A."/>
            <person name="Prabhakar S."/>
            <person name="She X."/>
            <person name="Xie G."/>
            <person name="Hellsten U."/>
            <person name="Chan Y.M."/>
            <person name="Altherr M."/>
            <person name="Couronne O."/>
            <person name="Aerts A."/>
            <person name="Bajorek E."/>
            <person name="Black S."/>
            <person name="Blumer H."/>
            <person name="Branscomb E."/>
            <person name="Brown N.C."/>
            <person name="Bruno W.J."/>
            <person name="Buckingham J.M."/>
            <person name="Callen D.F."/>
            <person name="Campbell C.S."/>
            <person name="Campbell M.L."/>
            <person name="Campbell E.W."/>
            <person name="Caoile C."/>
            <person name="Challacombe J.F."/>
            <person name="Chasteen L.A."/>
            <person name="Chertkov O."/>
            <person name="Chi H.C."/>
            <person name="Christensen M."/>
            <person name="Clark L.M."/>
            <person name="Cohn J.D."/>
            <person name="Denys M."/>
            <person name="Detter J.C."/>
            <person name="Dickson M."/>
            <person name="Dimitrijevic-Bussod M."/>
            <person name="Escobar J."/>
            <person name="Fawcett J.J."/>
            <person name="Flowers D."/>
            <person name="Fotopulos D."/>
            <person name="Glavina T."/>
            <person name="Gomez M."/>
            <person name="Gonzales E."/>
            <person name="Goodstein D."/>
            <person name="Goodwin L.A."/>
            <person name="Grady D.L."/>
            <person name="Grigoriev I."/>
            <person name="Groza M."/>
            <person name="Hammon N."/>
            <person name="Hawkins T."/>
            <person name="Haydu L."/>
            <person name="Hildebrand C.E."/>
            <person name="Huang W."/>
            <person name="Israni S."/>
            <person name="Jett J."/>
            <person name="Jewett P.B."/>
            <person name="Kadner K."/>
            <person name="Kimball H."/>
            <person name="Kobayashi A."/>
            <person name="Krawczyk M.-C."/>
            <person name="Leyba T."/>
            <person name="Longmire J.L."/>
            <person name="Lopez F."/>
            <person name="Lou Y."/>
            <person name="Lowry S."/>
            <person name="Ludeman T."/>
            <person name="Manohar C.F."/>
            <person name="Mark G.A."/>
            <person name="McMurray K.L."/>
            <person name="Meincke L.J."/>
            <person name="Morgan J."/>
            <person name="Moyzis R.K."/>
            <person name="Mundt M.O."/>
            <person name="Munk A.C."/>
            <person name="Nandkeshwar R.D."/>
            <person name="Pitluck S."/>
            <person name="Pollard M."/>
            <person name="Predki P."/>
            <person name="Parson-Quintana B."/>
            <person name="Ramirez L."/>
            <person name="Rash S."/>
            <person name="Retterer J."/>
            <person name="Ricke D.O."/>
            <person name="Robinson D.L."/>
            <person name="Rodriguez A."/>
            <person name="Salamov A."/>
            <person name="Saunders E.H."/>
            <person name="Scott D."/>
            <person name="Shough T."/>
            <person name="Stallings R.L."/>
            <person name="Stalvey M."/>
            <person name="Sutherland R.D."/>
            <person name="Tapia R."/>
            <person name="Tesmer J.G."/>
            <person name="Thayer N."/>
            <person name="Thompson L.S."/>
            <person name="Tice H."/>
            <person name="Torney D.C."/>
            <person name="Tran-Gyamfi M."/>
            <person name="Tsai M."/>
            <person name="Ulanovsky L.E."/>
            <person name="Ustaszewska A."/>
            <person name="Vo N."/>
            <person name="White P.S."/>
            <person name="Williams A.L."/>
            <person name="Wills P.L."/>
            <person name="Wu J.-R."/>
            <person name="Wu K."/>
            <person name="Yang J."/>
            <person name="DeJong P."/>
            <person name="Bruce D."/>
            <person name="Doggett N.A."/>
            <person name="Deaven L."/>
            <person name="Schmutz J."/>
            <person name="Grimwood J."/>
            <person name="Richardson P."/>
            <person name="Rokhsar D.S."/>
            <person name="Eichler E.E."/>
            <person name="Gilna P."/>
            <person name="Lucas S.M."/>
            <person name="Myers R.M."/>
            <person name="Rubin E.M."/>
            <person name="Pennacchio L.A."/>
        </authorList>
    </citation>
    <scope>NUCLEOTIDE SEQUENCE [LARGE SCALE GENOMIC DNA]</scope>
</reference>
<reference key="3">
    <citation type="journal article" date="2004" name="Genome Res.">
        <title>The status, quality, and expansion of the NIH full-length cDNA project: the Mammalian Gene Collection (MGC).</title>
        <authorList>
            <consortium name="The MGC Project Team"/>
        </authorList>
    </citation>
    <scope>NUCLEOTIDE SEQUENCE [LARGE SCALE MRNA] (ISOFORM 2)</scope>
    <source>
        <tissue>Muscle</tissue>
    </source>
</reference>
<reference key="4">
    <citation type="journal article" date="2000" name="Gene">
        <title>Identification and molecular analysis of BANP.</title>
        <authorList>
            <person name="Birot A.-M."/>
            <person name="Duret L."/>
            <person name="Bartholin L."/>
            <person name="Santalucia B."/>
            <person name="Tigaud I."/>
            <person name="Magaud J.-P."/>
            <person name="Rouault J.-P."/>
        </authorList>
    </citation>
    <scope>IDENTIFICATION</scope>
</reference>
<reference key="5">
    <citation type="journal article" date="2005" name="Mol. Cell. Biol.">
        <title>Tumor suppressor SMAR1 mediates cyclin D1 repression by recruitment of the SIN3/histone deacetylase 1 complex.</title>
        <authorList>
            <person name="Rampalli S."/>
            <person name="Pavithra L."/>
            <person name="Bhatt A."/>
            <person name="Kundu T.K."/>
            <person name="Chattopadhyay S."/>
        </authorList>
    </citation>
    <scope>FUNCTION</scope>
    <scope>INTERACTION WITH HDAC1</scope>
    <scope>IDENTIFICATION IN A COMPLEX WITH HDAC1; SIN3A; SIN3B; RBL1 AND RBL2</scope>
    <scope>TISSUE SPECIFICITY</scope>
    <scope>SUBCELLULAR LOCATION</scope>
</reference>
<reference key="6">
    <citation type="journal article" date="2010" name="Sci. Signal.">
        <title>Quantitative phosphoproteomics reveals widespread full phosphorylation site occupancy during mitosis.</title>
        <authorList>
            <person name="Olsen J.V."/>
            <person name="Vermeulen M."/>
            <person name="Santamaria A."/>
            <person name="Kumar C."/>
            <person name="Miller M.L."/>
            <person name="Jensen L.J."/>
            <person name="Gnad F."/>
            <person name="Cox J."/>
            <person name="Jensen T.S."/>
            <person name="Nigg E.A."/>
            <person name="Brunak S."/>
            <person name="Mann M."/>
        </authorList>
    </citation>
    <scope>IDENTIFICATION BY MASS SPECTROMETRY [LARGE SCALE ANALYSIS]</scope>
    <source>
        <tissue>Cervix carcinoma</tissue>
    </source>
</reference>
<reference key="7">
    <citation type="journal article" date="2013" name="J. Proteome Res.">
        <title>Toward a comprehensive characterization of a human cancer cell phosphoproteome.</title>
        <authorList>
            <person name="Zhou H."/>
            <person name="Di Palma S."/>
            <person name="Preisinger C."/>
            <person name="Peng M."/>
            <person name="Polat A.N."/>
            <person name="Heck A.J."/>
            <person name="Mohammed S."/>
        </authorList>
    </citation>
    <scope>PHOSPHORYLATION [LARGE SCALE ANALYSIS] AT SER-90 AND SER-100</scope>
    <scope>IDENTIFICATION BY MASS SPECTROMETRY [LARGE SCALE ANALYSIS]</scope>
    <source>
        <tissue>Erythroleukemia</tissue>
    </source>
</reference>
<reference key="8">
    <citation type="journal article" date="2014" name="J. Proteomics">
        <title>An enzyme assisted RP-RPLC approach for in-depth analysis of human liver phosphoproteome.</title>
        <authorList>
            <person name="Bian Y."/>
            <person name="Song C."/>
            <person name="Cheng K."/>
            <person name="Dong M."/>
            <person name="Wang F."/>
            <person name="Huang J."/>
            <person name="Sun D."/>
            <person name="Wang L."/>
            <person name="Ye M."/>
            <person name="Zou H."/>
        </authorList>
    </citation>
    <scope>PHOSPHORYLATION [LARGE SCALE ANALYSIS] AT SER-19</scope>
    <scope>IDENTIFICATION BY MASS SPECTROMETRY [LARGE SCALE ANALYSIS]</scope>
    <source>
        <tissue>Liver</tissue>
    </source>
</reference>
<reference key="9">
    <citation type="journal article" date="2015" name="Proc. Natl. Acad. Sci. U.S.A.">
        <title>Nuclear matrix-associated protein SMAR1 regulates alternative splicing via HDAC6-mediated deacetylation of Sam68.</title>
        <authorList>
            <person name="Nakka K.K."/>
            <person name="Chaudhary N."/>
            <person name="Joshi S."/>
            <person name="Bhat J."/>
            <person name="Singh K."/>
            <person name="Chatterjee S."/>
            <person name="Malhotra R."/>
            <person name="De A."/>
            <person name="Santra M.K."/>
            <person name="Dilworth F.J."/>
            <person name="Chattopadhyay S."/>
        </authorList>
    </citation>
    <scope>FUNCTION</scope>
    <scope>INTERACTION WITH HDAC6 AND KHDRBS1</scope>
    <scope>SUBCELLULAR LOCATION</scope>
</reference>
<reference key="10">
    <citation type="journal article" date="2017" name="Nat. Struct. Mol. Biol.">
        <title>Site-specific mapping of the human SUMO proteome reveals co-modification with phosphorylation.</title>
        <authorList>
            <person name="Hendriks I.A."/>
            <person name="Lyon D."/>
            <person name="Young C."/>
            <person name="Jensen L.J."/>
            <person name="Vertegaal A.C."/>
            <person name="Nielsen M.L."/>
        </authorList>
    </citation>
    <scope>SUMOYLATION [LARGE SCALE ANALYSIS] AT LYS-133</scope>
    <scope>IDENTIFICATION BY MASS SPECTROMETRY [LARGE SCALE ANALYSIS]</scope>
</reference>
<evidence type="ECO:0000250" key="1"/>
<evidence type="ECO:0000250" key="2">
    <source>
        <dbReference type="UniProtKB" id="Q8VBU8"/>
    </source>
</evidence>
<evidence type="ECO:0000255" key="3"/>
<evidence type="ECO:0000255" key="4">
    <source>
        <dbReference type="PROSITE-ProRule" id="PRU00784"/>
    </source>
</evidence>
<evidence type="ECO:0000256" key="5">
    <source>
        <dbReference type="SAM" id="MobiDB-lite"/>
    </source>
</evidence>
<evidence type="ECO:0000269" key="6">
    <source>
    </source>
</evidence>
<evidence type="ECO:0000269" key="7">
    <source>
    </source>
</evidence>
<evidence type="ECO:0000303" key="8">
    <source>
    </source>
</evidence>
<evidence type="ECO:0000303" key="9">
    <source>
    </source>
</evidence>
<evidence type="ECO:0000305" key="10"/>
<evidence type="ECO:0007744" key="11">
    <source>
    </source>
</evidence>
<evidence type="ECO:0007744" key="12">
    <source>
    </source>
</evidence>
<evidence type="ECO:0007744" key="13">
    <source>
    </source>
</evidence>
<evidence type="ECO:0007829" key="14">
    <source>
        <dbReference type="PDB" id="7YUG"/>
    </source>
</evidence>
<evidence type="ECO:0007829" key="15">
    <source>
        <dbReference type="PDB" id="8YZT"/>
    </source>
</evidence>
<dbReference type="EMBL" id="AK000545">
    <property type="protein sequence ID" value="BAA91244.1"/>
    <property type="molecule type" value="mRNA"/>
</dbReference>
<dbReference type="EMBL" id="AK094158">
    <property type="protein sequence ID" value="BAC04296.1"/>
    <property type="status" value="ALT_INIT"/>
    <property type="molecule type" value="mRNA"/>
</dbReference>
<dbReference type="EMBL" id="AK125232">
    <property type="protein sequence ID" value="BAG54171.1"/>
    <property type="molecule type" value="mRNA"/>
</dbReference>
<dbReference type="EMBL" id="AK297945">
    <property type="protein sequence ID" value="BAG60261.1"/>
    <property type="molecule type" value="mRNA"/>
</dbReference>
<dbReference type="EMBL" id="AK315089">
    <property type="protein sequence ID" value="BAG37554.1"/>
    <property type="molecule type" value="mRNA"/>
</dbReference>
<dbReference type="EMBL" id="AK315535">
    <property type="status" value="NOT_ANNOTATED_CDS"/>
    <property type="molecule type" value="mRNA"/>
</dbReference>
<dbReference type="EMBL" id="AC127455">
    <property type="status" value="NOT_ANNOTATED_CDS"/>
    <property type="molecule type" value="Genomic_DNA"/>
</dbReference>
<dbReference type="EMBL" id="AC134312">
    <property type="status" value="NOT_ANNOTATED_CDS"/>
    <property type="molecule type" value="Genomic_DNA"/>
</dbReference>
<dbReference type="EMBL" id="BC009424">
    <property type="protein sequence ID" value="AAH09424.1"/>
    <property type="molecule type" value="mRNA"/>
</dbReference>
<dbReference type="CCDS" id="CCDS10966.2">
    <molecule id="Q8N9N5-4"/>
</dbReference>
<dbReference type="CCDS" id="CCDS42215.1">
    <molecule id="Q8N9N5-2"/>
</dbReference>
<dbReference type="CCDS" id="CCDS54052.1">
    <molecule id="Q8N9N5-7"/>
</dbReference>
<dbReference type="CCDS" id="CCDS54053.1">
    <molecule id="Q8N9N5-6"/>
</dbReference>
<dbReference type="CCDS" id="CCDS54054.1">
    <molecule id="Q8N9N5-1"/>
</dbReference>
<dbReference type="CCDS" id="CCDS54055.1">
    <molecule id="Q8N9N5-5"/>
</dbReference>
<dbReference type="RefSeq" id="NP_001167010.1">
    <property type="nucleotide sequence ID" value="NM_001173539.1"/>
</dbReference>
<dbReference type="RefSeq" id="NP_001167011.1">
    <molecule id="Q8N9N5-5"/>
    <property type="nucleotide sequence ID" value="NM_001173540.2"/>
</dbReference>
<dbReference type="RefSeq" id="NP_001167012.1">
    <molecule id="Q8N9N5-6"/>
    <property type="nucleotide sequence ID" value="NM_001173541.2"/>
</dbReference>
<dbReference type="RefSeq" id="NP_001167013.1">
    <molecule id="Q8N9N5-7"/>
    <property type="nucleotide sequence ID" value="NM_001173542.1"/>
</dbReference>
<dbReference type="RefSeq" id="NP_001167014.1">
    <molecule id="Q8N9N5-1"/>
    <property type="nucleotide sequence ID" value="NM_001173543.1"/>
</dbReference>
<dbReference type="RefSeq" id="NP_001371845.1">
    <molecule id="Q8N9N5-2"/>
    <property type="nucleotide sequence ID" value="NM_001384916.1"/>
</dbReference>
<dbReference type="RefSeq" id="NP_001371850.1">
    <molecule id="Q8N9N5-6"/>
    <property type="nucleotide sequence ID" value="NM_001384921.1"/>
</dbReference>
<dbReference type="RefSeq" id="NP_001371851.1">
    <molecule id="Q8N9N5-6"/>
    <property type="nucleotide sequence ID" value="NM_001384922.1"/>
</dbReference>
<dbReference type="RefSeq" id="NP_001371852.1">
    <molecule id="Q8N9N5-6"/>
    <property type="nucleotide sequence ID" value="NM_001384923.1"/>
</dbReference>
<dbReference type="RefSeq" id="NP_001371854.1">
    <molecule id="Q8N9N5-7"/>
    <property type="nucleotide sequence ID" value="NM_001384925.1"/>
</dbReference>
<dbReference type="RefSeq" id="NP_001371855.1">
    <molecule id="Q8N9N5-7"/>
    <property type="nucleotide sequence ID" value="NM_001384926.1"/>
</dbReference>
<dbReference type="RefSeq" id="NP_001371856.1">
    <molecule id="Q8N9N5-7"/>
    <property type="nucleotide sequence ID" value="NM_001384927.1"/>
</dbReference>
<dbReference type="RefSeq" id="NP_060339.2">
    <molecule id="Q8N9N5-2"/>
    <property type="nucleotide sequence ID" value="NM_017869.3"/>
</dbReference>
<dbReference type="RefSeq" id="NP_524576.2">
    <molecule id="Q8N9N5-4"/>
    <property type="nucleotide sequence ID" value="NM_079837.3"/>
</dbReference>
<dbReference type="PDB" id="7YUG">
    <property type="method" value="X-ray"/>
    <property type="resolution" value="1.10 A"/>
    <property type="chains" value="A=208-324"/>
</dbReference>
<dbReference type="PDB" id="7YUK">
    <property type="method" value="X-ray"/>
    <property type="resolution" value="2.11 A"/>
    <property type="chains" value="A=208-347"/>
</dbReference>
<dbReference type="PDB" id="8HTX">
    <property type="method" value="X-ray"/>
    <property type="resolution" value="2.80 A"/>
    <property type="chains" value="A/B=208-347"/>
</dbReference>
<dbReference type="PDB" id="8YZT">
    <property type="method" value="X-ray"/>
    <property type="resolution" value="2.58 A"/>
    <property type="chains" value="A/B/C/D=205-325"/>
</dbReference>
<dbReference type="PDBsum" id="7YUG"/>
<dbReference type="PDBsum" id="7YUK"/>
<dbReference type="PDBsum" id="8HTX"/>
<dbReference type="PDBsum" id="8YZT"/>
<dbReference type="SMR" id="Q8N9N5"/>
<dbReference type="BioGRID" id="120308">
    <property type="interactions" value="326"/>
</dbReference>
<dbReference type="CORUM" id="Q8N9N5"/>
<dbReference type="FunCoup" id="Q8N9N5">
    <property type="interactions" value="2052"/>
</dbReference>
<dbReference type="IntAct" id="Q8N9N5">
    <property type="interactions" value="250"/>
</dbReference>
<dbReference type="MINT" id="Q8N9N5"/>
<dbReference type="STRING" id="9606.ENSP00000376902"/>
<dbReference type="GlyGen" id="Q8N9N5">
    <property type="glycosylation" value="1 site, 1 O-linked glycan (1 site)"/>
</dbReference>
<dbReference type="iPTMnet" id="Q8N9N5"/>
<dbReference type="PhosphoSitePlus" id="Q8N9N5"/>
<dbReference type="SwissPalm" id="Q8N9N5"/>
<dbReference type="BioMuta" id="BANP"/>
<dbReference type="DMDM" id="308153628"/>
<dbReference type="jPOST" id="Q8N9N5"/>
<dbReference type="MassIVE" id="Q8N9N5"/>
<dbReference type="PaxDb" id="9606-ENSP00000376902"/>
<dbReference type="PeptideAtlas" id="Q8N9N5"/>
<dbReference type="ProteomicsDB" id="25071"/>
<dbReference type="ProteomicsDB" id="72563">
    <molecule id="Q8N9N5-1"/>
</dbReference>
<dbReference type="ProteomicsDB" id="72564">
    <molecule id="Q8N9N5-2"/>
</dbReference>
<dbReference type="ProteomicsDB" id="72565">
    <molecule id="Q8N9N5-3"/>
</dbReference>
<dbReference type="ProteomicsDB" id="72566">
    <molecule id="Q8N9N5-4"/>
</dbReference>
<dbReference type="ProteomicsDB" id="72567">
    <molecule id="Q8N9N5-5"/>
</dbReference>
<dbReference type="ProteomicsDB" id="72568">
    <molecule id="Q8N9N5-6"/>
</dbReference>
<dbReference type="Pumba" id="Q8N9N5"/>
<dbReference type="Antibodypedia" id="30702">
    <property type="antibodies" value="160 antibodies from 31 providers"/>
</dbReference>
<dbReference type="DNASU" id="54971"/>
<dbReference type="Ensembl" id="ENST00000286122.11">
    <molecule id="Q8N9N5-1"/>
    <property type="protein sequence ID" value="ENSP00000286122.7"/>
    <property type="gene ID" value="ENSG00000172530.22"/>
</dbReference>
<dbReference type="Ensembl" id="ENST00000355022.8">
    <molecule id="Q8N9N5-2"/>
    <property type="protein sequence ID" value="ENSP00000347125.4"/>
    <property type="gene ID" value="ENSG00000172530.22"/>
</dbReference>
<dbReference type="Ensembl" id="ENST00000393207.5">
    <molecule id="Q8N9N5-1"/>
    <property type="protein sequence ID" value="ENSP00000376902.1"/>
    <property type="gene ID" value="ENSG00000172530.22"/>
</dbReference>
<dbReference type="Ensembl" id="ENST00000393208.6">
    <molecule id="Q8N9N5-4"/>
    <property type="protein sequence ID" value="ENSP00000376903.2"/>
    <property type="gene ID" value="ENSG00000172530.22"/>
</dbReference>
<dbReference type="Ensembl" id="ENST00000479780.6">
    <molecule id="Q8N9N5-6"/>
    <property type="protein sequence ID" value="ENSP00000432508.1"/>
    <property type="gene ID" value="ENSG00000172530.22"/>
</dbReference>
<dbReference type="Ensembl" id="ENST00000538234.5">
    <molecule id="Q8N9N5-7"/>
    <property type="protein sequence ID" value="ENSP00000444352.1"/>
    <property type="gene ID" value="ENSG00000172530.22"/>
</dbReference>
<dbReference type="Ensembl" id="ENST00000626016.2">
    <molecule id="Q8N9N5-5"/>
    <property type="protein sequence ID" value="ENSP00000487304.1"/>
    <property type="gene ID" value="ENSG00000172530.22"/>
</dbReference>
<dbReference type="GeneID" id="54971"/>
<dbReference type="KEGG" id="hsa:54971"/>
<dbReference type="UCSC" id="uc002fkp.4">
    <molecule id="Q8N9N5-1"/>
    <property type="organism name" value="human"/>
</dbReference>
<dbReference type="AGR" id="HGNC:13450"/>
<dbReference type="CTD" id="54971"/>
<dbReference type="DisGeNET" id="54971"/>
<dbReference type="GeneCards" id="BANP"/>
<dbReference type="HGNC" id="HGNC:13450">
    <property type="gene designation" value="BANP"/>
</dbReference>
<dbReference type="HPA" id="ENSG00000172530">
    <property type="expression patterns" value="Low tissue specificity"/>
</dbReference>
<dbReference type="MIM" id="611564">
    <property type="type" value="gene"/>
</dbReference>
<dbReference type="neXtProt" id="NX_Q8N9N5"/>
<dbReference type="OpenTargets" id="ENSG00000172530"/>
<dbReference type="PharmGKB" id="PA134933411"/>
<dbReference type="VEuPathDB" id="HostDB:ENSG00000172530"/>
<dbReference type="eggNOG" id="ENOG502QRIF">
    <property type="taxonomic scope" value="Eukaryota"/>
</dbReference>
<dbReference type="GeneTree" id="ENSGT00390000011116"/>
<dbReference type="HOGENOM" id="CLU_037322_0_0_1"/>
<dbReference type="InParanoid" id="Q8N9N5"/>
<dbReference type="OMA" id="TQQVQIH"/>
<dbReference type="OrthoDB" id="10052653at2759"/>
<dbReference type="PAN-GO" id="Q8N9N5">
    <property type="GO annotations" value="2 GO annotations based on evolutionary models"/>
</dbReference>
<dbReference type="PhylomeDB" id="Q8N9N5"/>
<dbReference type="TreeFam" id="TF331908"/>
<dbReference type="PathwayCommons" id="Q8N9N5"/>
<dbReference type="Reactome" id="R-HSA-6804759">
    <property type="pathway name" value="Regulation of TP53 Activity through Association with Co-factors"/>
</dbReference>
<dbReference type="SignaLink" id="Q8N9N5"/>
<dbReference type="SIGNOR" id="Q8N9N5"/>
<dbReference type="BioGRID-ORCS" id="54971">
    <property type="hits" value="644 hits in 1128 CRISPR screens"/>
</dbReference>
<dbReference type="ChiTaRS" id="BANP">
    <property type="organism name" value="human"/>
</dbReference>
<dbReference type="GeneWiki" id="BANP"/>
<dbReference type="GenomeRNAi" id="54971"/>
<dbReference type="Pharos" id="Q8N9N5">
    <property type="development level" value="Tbio"/>
</dbReference>
<dbReference type="PRO" id="PR:Q8N9N5"/>
<dbReference type="Proteomes" id="UP000005640">
    <property type="component" value="Chromosome 16"/>
</dbReference>
<dbReference type="RNAct" id="Q8N9N5">
    <property type="molecule type" value="protein"/>
</dbReference>
<dbReference type="Bgee" id="ENSG00000172530">
    <property type="expression patterns" value="Expressed in oocyte and 197 other cell types or tissues"/>
</dbReference>
<dbReference type="ExpressionAtlas" id="Q8N9N5">
    <property type="expression patterns" value="baseline and differential"/>
</dbReference>
<dbReference type="GO" id="GO:0005737">
    <property type="term" value="C:cytoplasm"/>
    <property type="evidence" value="ECO:0007669"/>
    <property type="project" value="UniProtKB-SubCell"/>
</dbReference>
<dbReference type="GO" id="GO:0016604">
    <property type="term" value="C:nuclear body"/>
    <property type="evidence" value="ECO:0000314"/>
    <property type="project" value="HPA"/>
</dbReference>
<dbReference type="GO" id="GO:0016607">
    <property type="term" value="C:nuclear speck"/>
    <property type="evidence" value="ECO:0007669"/>
    <property type="project" value="UniProtKB-SubCell"/>
</dbReference>
<dbReference type="GO" id="GO:0005654">
    <property type="term" value="C:nucleoplasm"/>
    <property type="evidence" value="ECO:0000314"/>
    <property type="project" value="HPA"/>
</dbReference>
<dbReference type="GO" id="GO:0003677">
    <property type="term" value="F:DNA binding"/>
    <property type="evidence" value="ECO:0007669"/>
    <property type="project" value="UniProtKB-KW"/>
</dbReference>
<dbReference type="GO" id="GO:0042802">
    <property type="term" value="F:identical protein binding"/>
    <property type="evidence" value="ECO:0000353"/>
    <property type="project" value="IntAct"/>
</dbReference>
<dbReference type="GO" id="GO:0006325">
    <property type="term" value="P:chromatin organization"/>
    <property type="evidence" value="ECO:0007669"/>
    <property type="project" value="UniProtKB-KW"/>
</dbReference>
<dbReference type="FunFam" id="1.10.10.2590:FF:000001">
    <property type="entry name" value="protein BANP isoform X1"/>
    <property type="match status" value="1"/>
</dbReference>
<dbReference type="Gene3D" id="1.10.10.2590">
    <property type="entry name" value="BEN domain"/>
    <property type="match status" value="1"/>
</dbReference>
<dbReference type="InterPro" id="IPR042343">
    <property type="entry name" value="BANP"/>
</dbReference>
<dbReference type="InterPro" id="IPR018379">
    <property type="entry name" value="BEN_domain"/>
</dbReference>
<dbReference type="PANTHER" id="PTHR16243">
    <property type="entry name" value="BTG3-ASSOCIATED NUCLEAR PROTEIN BANP"/>
    <property type="match status" value="1"/>
</dbReference>
<dbReference type="PANTHER" id="PTHR16243:SF2">
    <property type="entry name" value="PROTEIN BANP"/>
    <property type="match status" value="1"/>
</dbReference>
<dbReference type="Pfam" id="PF10523">
    <property type="entry name" value="BEN"/>
    <property type="match status" value="1"/>
</dbReference>
<dbReference type="SMART" id="SM01025">
    <property type="entry name" value="BEN"/>
    <property type="match status" value="1"/>
</dbReference>
<dbReference type="PROSITE" id="PS51457">
    <property type="entry name" value="BEN"/>
    <property type="match status" value="1"/>
</dbReference>
<sequence>MMSEHDLADVVQIAVEDLSPDHPVVLENHVVTDEDEPALKRQRLEINCQDPSIKTICLRLDSIEAKLQALEATCKSLEEKLDLVTNKQHSPIQVPMVAGSPLGATQTCNKVRCVVPQTTVILNNDRQNAIVAKMEDPLSNRAPDSLENVISNAVPGRRQNTIVVKVPGQEDSHHEDGESGSEASDSVSSCGQAGSQSIGSNVTLITLNSEEDYPNGTWLGDENNPEMRVRCAIIPSDMLHISTNCRTAEKMALTLLDYLFHREVQAVSNLSGQGKHGKKQLDPLTIYGIRCHLFYKFGITESDWYRIKQSIDSKCRTAWRRKQRGQSLAVKSFSRRTPNSSSYCPSEPMMSTPPPASELPQPQPQPQALHYALANAQQVQIHQIGEDGQVQVGHLHIAQVPQGEQVQITQDSEGNLQIHHVGQDGQLLEATRIPCLLAPSVFKASSGQVLQGAQLIAVASSDPAAAGVDGSPLQGSDIQVQYVQLAPVSDHTAGAQTAEALQPTLQPEMQLEHGAIQIQ</sequence>
<comment type="function">
    <text evidence="2 6 7">Controls V(D)J recombination during T-cell development by repressing T-cell receptor (TCR) beta enhancer function (By similarity). Binds to scaffold/matrix attachment region beta (S/MARbeta), an ATC-rich DNA sequence located upstream of the TCR beta enhancer (By similarity). Represses cyclin D1 transcription by recruiting HDAC1 to its promoter, thereby diminishing H3K9ac, H3S10ph and H4K8ac levels (PubMed:16166625). Promotes TP53 activation, which causes cell cycle arrest (By similarity). Plays a role in the regulation of alternative splicing (PubMed:26080397). Binds to CD44 pre-mRNA and negatively regulates the inclusion of CD44 proximal variable exons v2-v6 but has no effect on distal variable exons v7-v10 (PubMed:26080397).</text>
</comment>
<comment type="subunit">
    <text evidence="2 6 7">Part of a corepressor complex containing BANP, HDAC1, SIN3A, SIN3B, RBL1 and RBL2 (PubMed:16166625). Forms a trimeric complex in the nucleus consisting of BANP, HDAC6 and KHDRBS1/SAM68; HDAC6 keeps KHDRBS1 in a deacetylated state which inhibits the inclusion of CD44 alternate exons (PubMed:26080397). The complex is disrupted by MAPK1/MAPK3-mediated phosphorylation of BANP which results in BANP export to the cytoplasm (PubMed:26080397). This facilitates acetylation of KHDRBS1 and CD44 variant exon inclusion (PubMed:26080397). Interacts with TP53 (By similarity). Interacts with CUX1/CDP (By similarity). Interacts with HDAC1 (PubMed:16166625).</text>
</comment>
<comment type="interaction">
    <interactant intactId="EBI-744695">
        <id>Q8N9N5</id>
    </interactant>
    <interactant intactId="EBI-77818">
        <id>Q13444</id>
        <label>ADAM15</label>
    </interactant>
    <organismsDiffer>false</organismsDiffer>
    <experiments>3</experiments>
</comment>
<comment type="interaction">
    <interactant intactId="EBI-744695">
        <id>Q8N9N5</id>
    </interactant>
    <interactant intactId="EBI-2865743">
        <id>Q8WV93</id>
        <label>AFG1L</label>
    </interactant>
    <organismsDiffer>false</organismsDiffer>
    <experiments>3</experiments>
</comment>
<comment type="interaction">
    <interactant intactId="EBI-744695">
        <id>Q8N9N5</id>
    </interactant>
    <interactant intactId="EBI-2115743">
        <id>P22557</id>
        <label>ALAS2</label>
    </interactant>
    <organismsDiffer>false</organismsDiffer>
    <experiments>3</experiments>
</comment>
<comment type="interaction">
    <interactant intactId="EBI-744695">
        <id>Q8N9N5</id>
    </interactant>
    <interactant intactId="EBI-356517">
        <id>Q9UL15</id>
        <label>BAG5</label>
    </interactant>
    <organismsDiffer>false</organismsDiffer>
    <experiments>3</experiments>
</comment>
<comment type="interaction">
    <interactant intactId="EBI-744695">
        <id>Q8N9N5</id>
    </interactant>
    <interactant intactId="EBI-946029">
        <id>Q6P1W5</id>
        <label>C1orf94</label>
    </interactant>
    <organismsDiffer>false</organismsDiffer>
    <experiments>4</experiments>
</comment>
<comment type="interaction">
    <interactant intactId="EBI-744695">
        <id>Q8N9N5</id>
    </interactant>
    <interactant intactId="EBI-7317823">
        <id>Q6P5X5</id>
        <label>C22orf39</label>
    </interactant>
    <organismsDiffer>false</organismsDiffer>
    <experiments>3</experiments>
</comment>
<comment type="interaction">
    <interactant intactId="EBI-744695">
        <id>Q8N9N5</id>
    </interactant>
    <interactant intactId="EBI-351018">
        <id>Q13557</id>
        <label>CAMK2D</label>
    </interactant>
    <organismsDiffer>false</organismsDiffer>
    <experiments>4</experiments>
</comment>
<comment type="interaction">
    <interactant intactId="EBI-744695">
        <id>Q8N9N5</id>
    </interactant>
    <interactant intactId="EBI-742887">
        <id>Q8TAP6</id>
        <label>CEP76</label>
    </interactant>
    <organismsDiffer>false</organismsDiffer>
    <experiments>3</experiments>
</comment>
<comment type="interaction">
    <interactant intactId="EBI-744695">
        <id>Q8N9N5</id>
    </interactant>
    <interactant intactId="EBI-749051">
        <id>Q8IYR0</id>
        <label>CFAP206</label>
    </interactant>
    <organismsDiffer>false</organismsDiffer>
    <experiments>3</experiments>
</comment>
<comment type="interaction">
    <interactant intactId="EBI-744695">
        <id>Q8N9N5</id>
    </interactant>
    <interactant intactId="EBI-2528309">
        <id>Q03692</id>
        <label>COL10A1</label>
    </interactant>
    <organismsDiffer>false</organismsDiffer>
    <experiments>3</experiments>
</comment>
<comment type="interaction">
    <interactant intactId="EBI-744695">
        <id>Q8N9N5</id>
    </interactant>
    <interactant intactId="EBI-10173222">
        <id>A2VCK2</id>
        <label>DCDC2B</label>
    </interactant>
    <organismsDiffer>false</organismsDiffer>
    <experiments>3</experiments>
</comment>
<comment type="interaction">
    <interactant intactId="EBI-744695">
        <id>Q8N9N5</id>
    </interactant>
    <interactant intactId="EBI-10277181">
        <id>Q8WW22-2</id>
        <label>DNAJA4</label>
    </interactant>
    <organismsDiffer>false</organismsDiffer>
    <experiments>3</experiments>
</comment>
<comment type="interaction">
    <interactant intactId="EBI-744695">
        <id>Q8N9N5</id>
    </interactant>
    <interactant intactId="EBI-10244652">
        <id>Q5JZY3-3</id>
        <label>EPHA10</label>
    </interactant>
    <organismsDiffer>false</organismsDiffer>
    <experiments>3</experiments>
</comment>
<comment type="interaction">
    <interactant intactId="EBI-744695">
        <id>Q8N9N5</id>
    </interactant>
    <interactant intactId="EBI-3893327">
        <id>Q6P1L5</id>
        <label>FAM117B</label>
    </interactant>
    <organismsDiffer>false</organismsDiffer>
    <experiments>3</experiments>
</comment>
<comment type="interaction">
    <interactant intactId="EBI-744695">
        <id>Q8N9N5</id>
    </interactant>
    <interactant intactId="EBI-6658203">
        <id>Q86YD7</id>
        <label>FAM90A1</label>
    </interactant>
    <organismsDiffer>false</organismsDiffer>
    <experiments>3</experiments>
</comment>
<comment type="interaction">
    <interactant intactId="EBI-744695">
        <id>Q8N9N5</id>
    </interactant>
    <interactant intactId="EBI-701903">
        <id>Q14192</id>
        <label>FHL2</label>
    </interactant>
    <organismsDiffer>false</organismsDiffer>
    <experiments>7</experiments>
</comment>
<comment type="interaction">
    <interactant intactId="EBI-744695">
        <id>Q8N9N5</id>
    </interactant>
    <interactant intactId="EBI-10253815">
        <id>Q6PIV2</id>
        <label>FOXR1</label>
    </interactant>
    <organismsDiffer>false</organismsDiffer>
    <experiments>3</experiments>
</comment>
<comment type="interaction">
    <interactant intactId="EBI-744695">
        <id>Q8N9N5</id>
    </interactant>
    <interactant intactId="EBI-752049">
        <id>Q8NEG0</id>
        <label>GARIN6</label>
    </interactant>
    <organismsDiffer>false</organismsDiffer>
    <experiments>3</experiments>
</comment>
<comment type="interaction">
    <interactant intactId="EBI-744695">
        <id>Q8N9N5</id>
    </interactant>
    <interactant intactId="EBI-2371750">
        <id>Q969S9</id>
        <label>GFM2</label>
    </interactant>
    <organismsDiffer>false</organismsDiffer>
    <experiments>3</experiments>
</comment>
<comment type="interaction">
    <interactant intactId="EBI-744695">
        <id>Q8N9N5</id>
    </interactant>
    <interactant intactId="EBI-1047335">
        <id>Q9H1K1</id>
        <label>ISCU</label>
    </interactant>
    <organismsDiffer>false</organismsDiffer>
    <experiments>3</experiments>
</comment>
<comment type="interaction">
    <interactant intactId="EBI-744695">
        <id>Q8N9N5</id>
    </interactant>
    <interactant intactId="EBI-2686809">
        <id>Q96JM7</id>
        <label>L3MBTL3</label>
    </interactant>
    <organismsDiffer>false</organismsDiffer>
    <experiments>4</experiments>
</comment>
<comment type="interaction">
    <interactant intactId="EBI-744695">
        <id>Q8N9N5</id>
    </interactant>
    <interactant intactId="EBI-726510">
        <id>Q96BZ8</id>
        <label>LENG1</label>
    </interactant>
    <organismsDiffer>false</organismsDiffer>
    <experiments>4</experiments>
</comment>
<comment type="interaction">
    <interactant intactId="EBI-744695">
        <id>Q8N9N5</id>
    </interactant>
    <interactant intactId="EBI-10274069">
        <id>Q8TCE9</id>
        <label>LGALS14</label>
    </interactant>
    <organismsDiffer>false</organismsDiffer>
    <experiments>3</experiments>
</comment>
<comment type="interaction">
    <interactant intactId="EBI-744695">
        <id>Q8N9N5</id>
    </interactant>
    <interactant intactId="EBI-739696">
        <id>P25791</id>
        <label>LMO2</label>
    </interactant>
    <organismsDiffer>false</organismsDiffer>
    <experiments>3</experiments>
</comment>
<comment type="interaction">
    <interactant intactId="EBI-744695">
        <id>Q8N9N5</id>
    </interactant>
    <interactant intactId="EBI-742259">
        <id>Q8TAP4</id>
        <label>LMO3</label>
    </interactant>
    <organismsDiffer>false</organismsDiffer>
    <experiments>3</experiments>
</comment>
<comment type="interaction">
    <interactant intactId="EBI-744695">
        <id>Q8N9N5</id>
    </interactant>
    <interactant intactId="EBI-2798728">
        <id>P61968</id>
        <label>LMO4</label>
    </interactant>
    <organismsDiffer>false</organismsDiffer>
    <experiments>3</experiments>
</comment>
<comment type="interaction">
    <interactant intactId="EBI-744695">
        <id>Q8N9N5</id>
    </interactant>
    <interactant intactId="EBI-347416">
        <id>Q9Y333</id>
        <label>LSM2</label>
    </interactant>
    <organismsDiffer>false</organismsDiffer>
    <experiments>3</experiments>
</comment>
<comment type="interaction">
    <interactant intactId="EBI-744695">
        <id>Q8N9N5</id>
    </interactant>
    <interactant intactId="EBI-492564">
        <id>Q02750</id>
        <label>MAP2K1</label>
    </interactant>
    <organismsDiffer>false</organismsDiffer>
    <experiments>3</experiments>
</comment>
<comment type="interaction">
    <interactant intactId="EBI-744695">
        <id>Q8N9N5</id>
    </interactant>
    <interactant intactId="EBI-751711">
        <id>P61244</id>
        <label>MAX</label>
    </interactant>
    <organismsDiffer>false</organismsDiffer>
    <experiments>3</experiments>
</comment>
<comment type="interaction">
    <interactant intactId="EBI-744695">
        <id>Q8N9N5</id>
    </interactant>
    <interactant intactId="EBI-10242717">
        <id>Q53S70</id>
        <label>MGC4677</label>
    </interactant>
    <organismsDiffer>false</organismsDiffer>
    <experiments>3</experiments>
</comment>
<comment type="interaction">
    <interactant intactId="EBI-744695">
        <id>Q8N9N5</id>
    </interactant>
    <interactant intactId="EBI-723426">
        <id>Q13084</id>
        <label>MRPL28</label>
    </interactant>
    <organismsDiffer>false</organismsDiffer>
    <experiments>3</experiments>
</comment>
<comment type="interaction">
    <interactant intactId="EBI-744695">
        <id>Q8N9N5</id>
    </interactant>
    <interactant intactId="EBI-2108053">
        <id>Q14511</id>
        <label>NEDD9</label>
    </interactant>
    <organismsDiffer>false</organismsDiffer>
    <experiments>4</experiments>
</comment>
<comment type="interaction">
    <interactant intactId="EBI-744695">
        <id>Q8N9N5</id>
    </interactant>
    <interactant intactId="EBI-3913975">
        <id>Q9BQI9</id>
        <label>NRIP2</label>
    </interactant>
    <organismsDiffer>false</organismsDiffer>
    <experiments>3</experiments>
</comment>
<comment type="interaction">
    <interactant intactId="EBI-744695">
        <id>Q8N9N5</id>
    </interactant>
    <interactant intactId="EBI-745085">
        <id>Q96BD5</id>
        <label>PHF21A</label>
    </interactant>
    <organismsDiffer>false</organismsDiffer>
    <experiments>4</experiments>
</comment>
<comment type="interaction">
    <interactant intactId="EBI-744695">
        <id>Q8N9N5</id>
    </interactant>
    <interactant intactId="EBI-10256685">
        <id>Q7Z2X4</id>
        <label>PID1</label>
    </interactant>
    <organismsDiffer>false</organismsDiffer>
    <experiments>3</experiments>
</comment>
<comment type="interaction">
    <interactant intactId="EBI-744695">
        <id>Q8N9N5</id>
    </interactant>
    <interactant intactId="EBI-696621">
        <id>P11309</id>
        <label>PIM1</label>
    </interactant>
    <organismsDiffer>false</organismsDiffer>
    <experiments>3</experiments>
</comment>
<comment type="interaction">
    <interactant intactId="EBI-744695">
        <id>Q8N9N5</id>
    </interactant>
    <interactant intactId="EBI-1389308">
        <id>Q7Z3K3</id>
        <label>POGZ</label>
    </interactant>
    <organismsDiffer>false</organismsDiffer>
    <experiments>5</experiments>
</comment>
<comment type="interaction">
    <interactant intactId="EBI-744695">
        <id>Q8N9N5</id>
    </interactant>
    <interactant intactId="EBI-10276663">
        <id>Q8WUT1</id>
        <label>POLDIP3</label>
    </interactant>
    <organismsDiffer>false</organismsDiffer>
    <experiments>3</experiments>
</comment>
<comment type="interaction">
    <interactant intactId="EBI-744695">
        <id>Q8N9N5</id>
    </interactant>
    <interactant intactId="EBI-359527">
        <id>P62875</id>
        <label>POLR2L</label>
    </interactant>
    <organismsDiffer>false</organismsDiffer>
    <experiments>3</experiments>
</comment>
<comment type="interaction">
    <interactant intactId="EBI-744695">
        <id>Q8N9N5</id>
    </interactant>
    <interactant intactId="EBI-359252">
        <id>P23284</id>
        <label>PPIB</label>
    </interactant>
    <organismsDiffer>false</organismsDiffer>
    <experiments>3</experiments>
</comment>
<comment type="interaction">
    <interactant intactId="EBI-744695">
        <id>Q8N9N5</id>
    </interactant>
    <interactant intactId="EBI-953909">
        <id>P45877</id>
        <label>PPIC</label>
    </interactant>
    <organismsDiffer>false</organismsDiffer>
    <experiments>3</experiments>
</comment>
<comment type="interaction">
    <interactant intactId="EBI-744695">
        <id>Q8N9N5</id>
    </interactant>
    <interactant intactId="EBI-5544229">
        <id>P30405</id>
        <label>PPIF</label>
    </interactant>
    <organismsDiffer>false</organismsDiffer>
    <experiments>3</experiments>
</comment>
<comment type="interaction">
    <interactant intactId="EBI-744695">
        <id>Q8N9N5</id>
    </interactant>
    <interactant intactId="EBI-1053424">
        <id>O43741</id>
        <label>PRKAB2</label>
    </interactant>
    <organismsDiffer>false</organismsDiffer>
    <experiments>3</experiments>
</comment>
<comment type="interaction">
    <interactant intactId="EBI-744695">
        <id>Q8N9N5</id>
    </interactant>
    <interactant intactId="EBI-10299920">
        <id>Q9BVQ0</id>
        <label>PRKCH</label>
    </interactant>
    <organismsDiffer>false</organismsDiffer>
    <experiments>3</experiments>
</comment>
<comment type="interaction">
    <interactant intactId="EBI-744695">
        <id>Q8N9N5</id>
    </interactant>
    <interactant intactId="EBI-750973">
        <id>O00233</id>
        <label>PSMD9</label>
    </interactant>
    <organismsDiffer>false</organismsDiffer>
    <experiments>3</experiments>
</comment>
<comment type="interaction">
    <interactant intactId="EBI-744695">
        <id>Q8N9N5</id>
    </interactant>
    <interactant intactId="EBI-747844">
        <id>Q96QF0</id>
        <label>RAB3IP</label>
    </interactant>
    <organismsDiffer>false</organismsDiffer>
    <experiments>3</experiments>
</comment>
<comment type="interaction">
    <interactant intactId="EBI-744695">
        <id>Q8N9N5</id>
    </interactant>
    <interactant intactId="EBI-6654703">
        <id>Q14498-3</id>
        <label>RBM39</label>
    </interactant>
    <organismsDiffer>false</organismsDiffer>
    <experiments>3</experiments>
</comment>
<comment type="interaction">
    <interactant intactId="EBI-744695">
        <id>Q8N9N5</id>
    </interactant>
    <interactant intactId="EBI-740322">
        <id>Q93062</id>
        <label>RBPMS</label>
    </interactant>
    <organismsDiffer>false</organismsDiffer>
    <experiments>3</experiments>
</comment>
<comment type="interaction">
    <interactant intactId="EBI-744695">
        <id>Q8N9N5</id>
    </interactant>
    <interactant intactId="EBI-10225873">
        <id>Q08AM8</id>
        <label>SH3RF2</label>
    </interactant>
    <organismsDiffer>false</organismsDiffer>
    <experiments>3</experiments>
</comment>
<comment type="interaction">
    <interactant intactId="EBI-744695">
        <id>Q8N9N5</id>
    </interactant>
    <interactant intactId="EBI-2130111">
        <id>Q8TEC5</id>
        <label>SH3RF2</label>
    </interactant>
    <organismsDiffer>false</organismsDiffer>
    <experiments>3</experiments>
</comment>
<comment type="interaction">
    <interactant intactId="EBI-744695">
        <id>Q8N9N5</id>
    </interactant>
    <interactant intactId="EBI-7600166">
        <id>O15427</id>
        <label>SLC16A3</label>
    </interactant>
    <organismsDiffer>false</organismsDiffer>
    <experiments>3</experiments>
</comment>
<comment type="interaction">
    <interactant intactId="EBI-744695">
        <id>Q8N9N5</id>
    </interactant>
    <interactant intactId="EBI-372475">
        <id>P14678-2</id>
        <label>SNRPB</label>
    </interactant>
    <organismsDiffer>false</organismsDiffer>
    <experiments>3</experiments>
</comment>
<comment type="interaction">
    <interactant intactId="EBI-744695">
        <id>Q8N9N5</id>
    </interactant>
    <interactant intactId="EBI-8651703">
        <id>Q02086</id>
        <label>SP2</label>
    </interactant>
    <organismsDiffer>false</organismsDiffer>
    <experiments>4</experiments>
</comment>
<comment type="interaction">
    <interactant intactId="EBI-744695">
        <id>Q8N9N5</id>
    </interactant>
    <interactant intactId="EBI-10176265">
        <id>W5XKT8</id>
        <label>SPACA6</label>
    </interactant>
    <organismsDiffer>false</organismsDiffer>
    <experiments>3</experiments>
</comment>
<comment type="interaction">
    <interactant intactId="EBI-744695">
        <id>Q8N9N5</id>
    </interactant>
    <interactant intactId="EBI-10242677">
        <id>Q53NU3</id>
        <label>tmp_locus_54</label>
    </interactant>
    <organismsDiffer>false</organismsDiffer>
    <experiments>3</experiments>
</comment>
<comment type="interaction">
    <interactant intactId="EBI-744695">
        <id>Q8N9N5</id>
    </interactant>
    <interactant intactId="EBI-2821024">
        <id>P22105</id>
        <label>TNXB</label>
    </interactant>
    <organismsDiffer>false</organismsDiffer>
    <experiments>4</experiments>
</comment>
<comment type="interaction">
    <interactant intactId="EBI-744695">
        <id>Q8N9N5</id>
    </interactant>
    <interactant intactId="EBI-948613">
        <id>O94842</id>
        <label>TOX4</label>
    </interactant>
    <organismsDiffer>false</organismsDiffer>
    <experiments>3</experiments>
</comment>
<comment type="interaction">
    <interactant intactId="EBI-744695">
        <id>Q8N9N5</id>
    </interactant>
    <interactant intactId="EBI-366083">
        <id>P04637</id>
        <label>TP53</label>
    </interactant>
    <organismsDiffer>false</organismsDiffer>
    <experiments>3</experiments>
</comment>
<comment type="interaction">
    <interactant intactId="EBI-744695">
        <id>Q8N9N5</id>
    </interactant>
    <interactant intactId="EBI-355744">
        <id>Q12933</id>
        <label>TRAF2</label>
    </interactant>
    <organismsDiffer>false</organismsDiffer>
    <experiments>4</experiments>
</comment>
<comment type="interaction">
    <interactant intactId="EBI-744695">
        <id>Q8N9N5</id>
    </interactant>
    <interactant intactId="EBI-3650647">
        <id>Q9BUZ4</id>
        <label>TRAF4</label>
    </interactant>
    <organismsDiffer>false</organismsDiffer>
    <experiments>3</experiments>
</comment>
<comment type="interaction">
    <interactant intactId="EBI-744695">
        <id>Q8N9N5</id>
    </interactant>
    <interactant intactId="EBI-2349743">
        <id>Q12815</id>
        <label>TROAP</label>
    </interactant>
    <organismsDiffer>false</organismsDiffer>
    <experiments>4</experiments>
</comment>
<comment type="interaction">
    <interactant intactId="EBI-744695">
        <id>Q8N9N5</id>
    </interactant>
    <interactant intactId="EBI-2340004">
        <id>Q9HD64</id>
        <label>XAGE1B</label>
    </interactant>
    <organismsDiffer>false</organismsDiffer>
    <experiments>3</experiments>
</comment>
<comment type="interaction">
    <interactant intactId="EBI-744695">
        <id>Q8N9N5</id>
    </interactant>
    <interactant intactId="EBI-740767">
        <id>Q53FD0</id>
        <label>ZC2HC1C</label>
    </interactant>
    <organismsDiffer>false</organismsDiffer>
    <experiments>3</experiments>
</comment>
<comment type="interaction">
    <interactant intactId="EBI-744695">
        <id>Q8N9N5</id>
    </interactant>
    <interactant intactId="EBI-10182121">
        <id>Q8NF64-2</id>
        <label>ZMIZ2</label>
    </interactant>
    <organismsDiffer>false</organismsDiffer>
    <experiments>3</experiments>
</comment>
<comment type="interaction">
    <interactant intactId="EBI-744695">
        <id>Q8N9N5</id>
    </interactant>
    <interactant intactId="EBI-2826668">
        <id>Q9BX82</id>
        <label>ZNF471</label>
    </interactant>
    <organismsDiffer>false</organismsDiffer>
    <experiments>5</experiments>
</comment>
<comment type="interaction">
    <interactant intactId="EBI-744695">
        <id>Q8N9N5</id>
    </interactant>
    <interactant intactId="EBI-948288">
        <id>Q96MN9</id>
        <label>ZNF488</label>
    </interactant>
    <organismsDiffer>false</organismsDiffer>
    <experiments>3</experiments>
</comment>
<comment type="interaction">
    <interactant intactId="EBI-744695">
        <id>Q8N9N5</id>
    </interactant>
    <interactant intactId="EBI-745520">
        <id>Q9P0T4</id>
        <label>ZNF581</label>
    </interactant>
    <organismsDiffer>false</organismsDiffer>
    <experiments>3</experiments>
</comment>
<comment type="interaction">
    <interactant intactId="EBI-11524452">
        <id>Q8N9N5-2</id>
    </interactant>
    <interactant intactId="EBI-11961672">
        <id>O94929-2</id>
        <label>ABLIM3</label>
    </interactant>
    <organismsDiffer>false</organismsDiffer>
    <experiments>3</experiments>
</comment>
<comment type="interaction">
    <interactant intactId="EBI-11524452">
        <id>Q8N9N5-2</id>
    </interactant>
    <interactant intactId="EBI-12257000">
        <id>P22557-2</id>
        <label>ALAS2</label>
    </interactant>
    <organismsDiffer>false</organismsDiffer>
    <experiments>6</experiments>
</comment>
<comment type="interaction">
    <interactant intactId="EBI-11524452">
        <id>Q8N9N5-2</id>
    </interactant>
    <interactant intactId="EBI-12224467">
        <id>Q9NYG5-2</id>
        <label>ANAPC11</label>
    </interactant>
    <organismsDiffer>false</organismsDiffer>
    <experiments>3</experiments>
</comment>
<comment type="interaction">
    <interactant intactId="EBI-11524452">
        <id>Q8N9N5-2</id>
    </interactant>
    <interactant intactId="EBI-14493093">
        <id>Q3KP44</id>
        <label>ANKRD55</label>
    </interactant>
    <organismsDiffer>false</organismsDiffer>
    <experiments>3</experiments>
</comment>
<comment type="interaction">
    <interactant intactId="EBI-11524452">
        <id>Q8N9N5-2</id>
    </interactant>
    <interactant intactId="EBI-713602">
        <id>Q9BQD7</id>
        <label>ANTKMT</label>
    </interactant>
    <organismsDiffer>false</organismsDiffer>
    <experiments>3</experiments>
</comment>
<comment type="interaction">
    <interactant intactId="EBI-11524452">
        <id>Q8N9N5-2</id>
    </interactant>
    <interactant intactId="EBI-948603">
        <id>Q03989</id>
        <label>ARID5A</label>
    </interactant>
    <organismsDiffer>false</organismsDiffer>
    <experiments>3</experiments>
</comment>
<comment type="interaction">
    <interactant intactId="EBI-11524452">
        <id>Q8N9N5-2</id>
    </interactant>
    <interactant intactId="EBI-1170906">
        <id>P15336</id>
        <label>ATF2</label>
    </interactant>
    <organismsDiffer>false</organismsDiffer>
    <experiments>3</experiments>
</comment>
<comment type="interaction">
    <interactant intactId="EBI-11524452">
        <id>Q8N9N5-2</id>
    </interactant>
    <interactant intactId="EBI-16429704">
        <id>A0A0S2Z5G4</id>
        <label>BANP</label>
    </interactant>
    <organismsDiffer>false</organismsDiffer>
    <experiments>3</experiments>
</comment>
<comment type="interaction">
    <interactant intactId="EBI-11524452">
        <id>Q8N9N5-2</id>
    </interactant>
    <interactant intactId="EBI-16429313">
        <id>B4DE54</id>
        <label>BANP</label>
    </interactant>
    <organismsDiffer>false</organismsDiffer>
    <experiments>4</experiments>
</comment>
<comment type="interaction">
    <interactant intactId="EBI-11524452">
        <id>Q8N9N5-2</id>
    </interactant>
    <interactant intactId="EBI-16437731">
        <id>E9PJI6</id>
        <label>BANP</label>
    </interactant>
    <organismsDiffer>false</organismsDiffer>
    <experiments>3</experiments>
</comment>
<comment type="interaction">
    <interactant intactId="EBI-11524452">
        <id>Q8N9N5-2</id>
    </interactant>
    <interactant intactId="EBI-11524452">
        <id>Q8N9N5-2</id>
        <label>BANP</label>
    </interactant>
    <organismsDiffer>false</organismsDiffer>
    <experiments>6</experiments>
</comment>
<comment type="interaction">
    <interactant intactId="EBI-11524452">
        <id>Q8N9N5-2</id>
    </interactant>
    <interactant intactId="EBI-1012434">
        <id>Q6AI39</id>
        <label>BICRAL</label>
    </interactant>
    <organismsDiffer>false</organismsDiffer>
    <experiments>3</experiments>
</comment>
<comment type="interaction">
    <interactant intactId="EBI-11524452">
        <id>Q8N9N5-2</id>
    </interactant>
    <interactant intactId="EBI-2548012">
        <id>Q9H2G9</id>
        <label>BLZF1</label>
    </interactant>
    <organismsDiffer>false</organismsDiffer>
    <experiments>3</experiments>
</comment>
<comment type="interaction">
    <interactant intactId="EBI-11524452">
        <id>Q8N9N5-2</id>
    </interactant>
    <interactant intactId="EBI-12208129">
        <id>Q96DN7</id>
        <label>BOC</label>
    </interactant>
    <organismsDiffer>false</organismsDiffer>
    <experiments>3</experiments>
</comment>
<comment type="interaction">
    <interactant intactId="EBI-11524452">
        <id>Q8N9N5-2</id>
    </interactant>
    <interactant intactId="EBI-946029">
        <id>Q6P1W5</id>
        <label>C1orf94</label>
    </interactant>
    <organismsDiffer>false</organismsDiffer>
    <experiments>3</experiments>
</comment>
<comment type="interaction">
    <interactant intactId="EBI-11524452">
        <id>Q8N9N5-2</id>
    </interactant>
    <interactant intactId="EBI-2817707">
        <id>Q9BXJ5</id>
        <label>C1QTNF2</label>
    </interactant>
    <organismsDiffer>false</organismsDiffer>
    <experiments>3</experiments>
</comment>
<comment type="interaction">
    <interactant intactId="EBI-11524452">
        <id>Q8N9N5-2</id>
    </interactant>
    <interactant intactId="EBI-12030460">
        <id>Q8WYQ4-2</id>
        <label>C22orf15</label>
    </interactant>
    <organismsDiffer>false</organismsDiffer>
    <experiments>3</experiments>
</comment>
<comment type="interaction">
    <interactant intactId="EBI-11524452">
        <id>Q8N9N5-2</id>
    </interactant>
    <interactant intactId="EBI-18036948">
        <id>Q3SXR2</id>
        <label>C3orf36</label>
    </interactant>
    <organismsDiffer>false</organismsDiffer>
    <experiments>3</experiments>
</comment>
<comment type="interaction">
    <interactant intactId="EBI-11524452">
        <id>Q8N9N5-2</id>
    </interactant>
    <interactant intactId="EBI-712912">
        <id>Q9HC52</id>
        <label>CBX8</label>
    </interactant>
    <organismsDiffer>false</organismsDiffer>
    <experiments>3</experiments>
</comment>
<comment type="interaction">
    <interactant intactId="EBI-11524452">
        <id>Q8N9N5-2</id>
    </interactant>
    <interactant intactId="EBI-17967022">
        <id>Q96LY2-2</id>
        <label>CCDC74B</label>
    </interactant>
    <organismsDiffer>false</organismsDiffer>
    <experiments>3</experiments>
</comment>
<comment type="interaction">
    <interactant intactId="EBI-11524452">
        <id>Q8N9N5-2</id>
    </interactant>
    <interactant intactId="EBI-374980">
        <id>O00311</id>
        <label>CDC7</label>
    </interactant>
    <organismsDiffer>false</organismsDiffer>
    <experiments>3</experiments>
</comment>
<comment type="interaction">
    <interactant intactId="EBI-11524452">
        <id>Q8N9N5-2</id>
    </interactant>
    <interactant intactId="EBI-519280">
        <id>P46527</id>
        <label>CDKN1B</label>
    </interactant>
    <organismsDiffer>false</organismsDiffer>
    <experiments>3</experiments>
</comment>
<comment type="interaction">
    <interactant intactId="EBI-11524452">
        <id>Q8N9N5-2</id>
    </interactant>
    <interactant intactId="EBI-742887">
        <id>Q8TAP6</id>
        <label>CEP76</label>
    </interactant>
    <organismsDiffer>false</organismsDiffer>
    <experiments>3</experiments>
</comment>
<comment type="interaction">
    <interactant intactId="EBI-11524452">
        <id>Q8N9N5-2</id>
    </interactant>
    <interactant intactId="EBI-749051">
        <id>Q8IYR0</id>
        <label>CFAP206</label>
    </interactant>
    <organismsDiffer>false</organismsDiffer>
    <experiments>3</experiments>
</comment>
<comment type="interaction">
    <interactant intactId="EBI-11524452">
        <id>Q8N9N5-2</id>
    </interactant>
    <interactant intactId="EBI-12593838">
        <id>Q6WN34-2</id>
        <label>CHRDL2</label>
    </interactant>
    <organismsDiffer>false</organismsDiffer>
    <experiments>3</experiments>
</comment>
<comment type="interaction">
    <interactant intactId="EBI-11524452">
        <id>Q8N9N5-2</id>
    </interactant>
    <interactant intactId="EBI-2528309">
        <id>Q03692</id>
        <label>COL10A1</label>
    </interactant>
    <organismsDiffer>false</organismsDiffer>
    <experiments>6</experiments>
</comment>
<comment type="interaction">
    <interactant intactId="EBI-11524452">
        <id>Q8N9N5-2</id>
    </interactant>
    <interactant intactId="EBI-748171">
        <id>O43186</id>
        <label>CRX</label>
    </interactant>
    <organismsDiffer>false</organismsDiffer>
    <experiments>6</experiments>
</comment>
<comment type="interaction">
    <interactant intactId="EBI-11524452">
        <id>Q8N9N5-2</id>
    </interactant>
    <interactant intactId="EBI-348169">
        <id>P67870</id>
        <label>CSNK2B</label>
    </interactant>
    <organismsDiffer>false</organismsDiffer>
    <experiments>3</experiments>
</comment>
<comment type="interaction">
    <interactant intactId="EBI-11524452">
        <id>Q8N9N5-2</id>
    </interactant>
    <interactant intactId="EBI-8636823">
        <id>Q9UBR2</id>
        <label>CTSZ</label>
    </interactant>
    <organismsDiffer>false</organismsDiffer>
    <experiments>3</experiments>
</comment>
<comment type="interaction">
    <interactant intactId="EBI-11524452">
        <id>Q8N9N5-2</id>
    </interactant>
    <interactant intactId="EBI-3908248">
        <id>O60479</id>
        <label>DLX3</label>
    </interactant>
    <organismsDiffer>false</organismsDiffer>
    <experiments>3</experiments>
</comment>
<comment type="interaction">
    <interactant intactId="EBI-11524452">
        <id>Q8N9N5-2</id>
    </interactant>
    <interactant intactId="EBI-744099">
        <id>Q9H0I2</id>
        <label>ENKD1</label>
    </interactant>
    <organismsDiffer>false</organismsDiffer>
    <experiments>3</experiments>
</comment>
<comment type="interaction">
    <interactant intactId="EBI-11524452">
        <id>Q8N9N5-2</id>
    </interactant>
    <interactant intactId="EBI-12260294">
        <id>Q9NQ30</id>
        <label>ESM1</label>
    </interactant>
    <organismsDiffer>false</organismsDiffer>
    <experiments>3</experiments>
</comment>
<comment type="interaction">
    <interactant intactId="EBI-11524452">
        <id>Q8N9N5-2</id>
    </interactant>
    <interactant intactId="EBI-3893327">
        <id>Q6P1L5</id>
        <label>FAM117B</label>
    </interactant>
    <organismsDiffer>false</organismsDiffer>
    <experiments>4</experiments>
</comment>
<comment type="interaction">
    <interactant intactId="EBI-11524452">
        <id>Q8N9N5-2</id>
    </interactant>
    <interactant intactId="EBI-19153639">
        <id>Q9NTX9</id>
        <label>FAM217B</label>
    </interactant>
    <organismsDiffer>false</organismsDiffer>
    <experiments>3</experiments>
</comment>
<comment type="interaction">
    <interactant intactId="EBI-11524452">
        <id>Q8N9N5-2</id>
    </interactant>
    <interactant intactId="EBI-2807642">
        <id>Q8WU58</id>
        <label>FAM222B</label>
    </interactant>
    <organismsDiffer>false</organismsDiffer>
    <experiments>3</experiments>
</comment>
<comment type="interaction">
    <interactant intactId="EBI-11524452">
        <id>Q8N9N5-2</id>
    </interactant>
    <interactant intactId="EBI-6658203">
        <id>Q86YD7</id>
        <label>FAM90A1</label>
    </interactant>
    <organismsDiffer>false</organismsDiffer>
    <experiments>3</experiments>
</comment>
<comment type="interaction">
    <interactant intactId="EBI-11524452">
        <id>Q8N9N5-2</id>
    </interactant>
    <interactant intactId="EBI-2513774">
        <id>O95363</id>
        <label>FARS2</label>
    </interactant>
    <organismsDiffer>false</organismsDiffer>
    <experiments>4</experiments>
</comment>
<comment type="interaction">
    <interactant intactId="EBI-11524452">
        <id>Q8N9N5-2</id>
    </interactant>
    <interactant intactId="EBI-701903">
        <id>Q14192</id>
        <label>FHL2</label>
    </interactant>
    <organismsDiffer>false</organismsDiffer>
    <experiments>6</experiments>
</comment>
<comment type="interaction">
    <interactant intactId="EBI-11524452">
        <id>Q8N9N5-2</id>
    </interactant>
    <interactant intactId="EBI-750641">
        <id>Q5TD97</id>
        <label>FHL5</label>
    </interactant>
    <organismsDiffer>false</organismsDiffer>
    <experiments>3</experiments>
</comment>
<comment type="interaction">
    <interactant intactId="EBI-11524452">
        <id>Q8N9N5-2</id>
    </interactant>
    <interactant intactId="EBI-603643">
        <id>O75955</id>
        <label>FLOT1</label>
    </interactant>
    <organismsDiffer>false</organismsDiffer>
    <experiments>3</experiments>
</comment>
<comment type="interaction">
    <interactant intactId="EBI-11524452">
        <id>Q8N9N5-2</id>
    </interactant>
    <interactant intactId="EBI-866480">
        <id>Q08050</id>
        <label>FOXM1</label>
    </interactant>
    <organismsDiffer>false</organismsDiffer>
    <experiments>3</experiments>
</comment>
<comment type="interaction">
    <interactant intactId="EBI-11524452">
        <id>Q8N9N5-2</id>
    </interactant>
    <interactant intactId="EBI-5237510">
        <id>Q08050-2</id>
        <label>FOXM1</label>
    </interactant>
    <organismsDiffer>false</organismsDiffer>
    <experiments>3</experiments>
</comment>
<comment type="interaction">
    <interactant intactId="EBI-11524452">
        <id>Q8N9N5-2</id>
    </interactant>
    <interactant intactId="EBI-10253815">
        <id>Q6PIV2</id>
        <label>FOXR1</label>
    </interactant>
    <organismsDiffer>false</organismsDiffer>
    <experiments>3</experiments>
</comment>
<comment type="interaction">
    <interactant intactId="EBI-11524452">
        <id>Q8N9N5-2</id>
    </interactant>
    <interactant intactId="EBI-7960826">
        <id>Q8NHY3</id>
        <label>GAS2L2</label>
    </interactant>
    <organismsDiffer>false</organismsDiffer>
    <experiments>3</experiments>
</comment>
<comment type="interaction">
    <interactant intactId="EBI-11524452">
        <id>Q8N9N5-2</id>
    </interactant>
    <interactant intactId="EBI-5916454">
        <id>A6NEM1</id>
        <label>GOLGA6L9</label>
    </interactant>
    <organismsDiffer>false</organismsDiffer>
    <experiments>3</experiments>
</comment>
<comment type="interaction">
    <interactant intactId="EBI-11524452">
        <id>Q8N9N5-2</id>
    </interactant>
    <interactant intactId="EBI-11956675">
        <id>Q9GZV7</id>
        <label>HAPLN2</label>
    </interactant>
    <organismsDiffer>false</organismsDiffer>
    <experiments>3</experiments>
</comment>
<comment type="interaction">
    <interactant intactId="EBI-11524452">
        <id>Q8N9N5-2</id>
    </interactant>
    <interactant intactId="EBI-751092">
        <id>Q9NQ87</id>
        <label>HEYL</label>
    </interactant>
    <organismsDiffer>false</organismsDiffer>
    <experiments>3</experiments>
</comment>
<comment type="interaction">
    <interactant intactId="EBI-11524452">
        <id>Q8N9N5-2</id>
    </interactant>
    <interactant intactId="EBI-12083878">
        <id>Q96JK4-2</id>
        <label>HHIPL1</label>
    </interactant>
    <organismsDiffer>false</organismsDiffer>
    <experiments>3</experiments>
</comment>
<comment type="interaction">
    <interactant intactId="EBI-11524452">
        <id>Q8N9N5-2</id>
    </interactant>
    <interactant intactId="EBI-12233645">
        <id>Q6ZQW0-2</id>
        <label>IDO2</label>
    </interactant>
    <organismsDiffer>false</organismsDiffer>
    <experiments>6</experiments>
</comment>
<comment type="interaction">
    <interactant intactId="EBI-11524452">
        <id>Q8N9N5-2</id>
    </interactant>
    <interactant intactId="EBI-12837046">
        <id>P05019-2</id>
        <label>IGF1</label>
    </interactant>
    <organismsDiffer>false</organismsDiffer>
    <experiments>3</experiments>
</comment>
<comment type="interaction">
    <interactant intactId="EBI-11524452">
        <id>Q8N9N5-2</id>
    </interactant>
    <interactant intactId="EBI-11955401">
        <id>Q86VF2-5</id>
        <label>IGFN1</label>
    </interactant>
    <organismsDiffer>false</organismsDiffer>
    <experiments>3</experiments>
</comment>
<comment type="interaction">
    <interactant intactId="EBI-11524452">
        <id>Q8N9N5-2</id>
    </interactant>
    <interactant intactId="EBI-715611">
        <id>Q9C086</id>
        <label>INO80B</label>
    </interactant>
    <organismsDiffer>false</organismsDiffer>
    <experiments>3</experiments>
</comment>
<comment type="interaction">
    <interactant intactId="EBI-11524452">
        <id>Q8N9N5-2</id>
    </interactant>
    <interactant intactId="EBI-4397613">
        <id>Q7L273</id>
        <label>KCTD9</label>
    </interactant>
    <organismsDiffer>false</organismsDiffer>
    <experiments>3</experiments>
</comment>
<comment type="interaction">
    <interactant intactId="EBI-11524452">
        <id>Q8N9N5-2</id>
    </interactant>
    <interactant intactId="EBI-9089060">
        <id>Q7Z7F0-4</id>
        <label>KHDC4</label>
    </interactant>
    <organismsDiffer>false</organismsDiffer>
    <experiments>3</experiments>
</comment>
<comment type="interaction">
    <interactant intactId="EBI-11524452">
        <id>Q8N9N5-2</id>
    </interactant>
    <interactant intactId="EBI-2796400">
        <id>Q9UIH9</id>
        <label>KLF15</label>
    </interactant>
    <organismsDiffer>false</organismsDiffer>
    <experiments>3</experiments>
</comment>
<comment type="interaction">
    <interactant intactId="EBI-11524452">
        <id>Q8N9N5-2</id>
    </interactant>
    <interactant intactId="EBI-10261141">
        <id>Q8IUC2</id>
        <label>KRTAP8-1</label>
    </interactant>
    <organismsDiffer>false</organismsDiffer>
    <experiments>3</experiments>
</comment>
<comment type="interaction">
    <interactant intactId="EBI-11524452">
        <id>Q8N9N5-2</id>
    </interactant>
    <interactant intactId="EBI-2339312">
        <id>P28838</id>
        <label>LAP3</label>
    </interactant>
    <organismsDiffer>false</organismsDiffer>
    <experiments>3</experiments>
</comment>
<comment type="interaction">
    <interactant intactId="EBI-11524452">
        <id>Q8N9N5-2</id>
    </interactant>
    <interactant intactId="EBI-10274069">
        <id>Q8TCE9</id>
        <label>LGALS14</label>
    </interactant>
    <organismsDiffer>false</organismsDiffer>
    <experiments>3</experiments>
</comment>
<comment type="interaction">
    <interactant intactId="EBI-11524452">
        <id>Q8N9N5-2</id>
    </interactant>
    <interactant intactId="EBI-720805">
        <id>P56470</id>
        <label>LGALS4</label>
    </interactant>
    <organismsDiffer>false</organismsDiffer>
    <experiments>3</experiments>
</comment>
<comment type="interaction">
    <interactant intactId="EBI-11524452">
        <id>Q8N9N5-2</id>
    </interactant>
    <interactant intactId="EBI-2865388">
        <id>Q969G2</id>
        <label>LHX4</label>
    </interactant>
    <organismsDiffer>false</organismsDiffer>
    <experiments>3</experiments>
</comment>
<comment type="interaction">
    <interactant intactId="EBI-11524452">
        <id>Q8N9N5-2</id>
    </interactant>
    <interactant intactId="EBI-8474075">
        <id>Q68G74</id>
        <label>LHX8</label>
    </interactant>
    <organismsDiffer>false</organismsDiffer>
    <experiments>3</experiments>
</comment>
<comment type="interaction">
    <interactant intactId="EBI-11524452">
        <id>Q8N9N5-2</id>
    </interactant>
    <interactant intactId="EBI-1389411">
        <id>Q6MZP7</id>
        <label>LIN54</label>
    </interactant>
    <organismsDiffer>false</organismsDiffer>
    <experiments>3</experiments>
</comment>
<comment type="interaction">
    <interactant intactId="EBI-11524452">
        <id>Q8N9N5-2</id>
    </interactant>
    <interactant intactId="EBI-8639312">
        <id>P25800</id>
        <label>LMO1</label>
    </interactant>
    <organismsDiffer>false</organismsDiffer>
    <experiments>3</experiments>
</comment>
<comment type="interaction">
    <interactant intactId="EBI-11524452">
        <id>Q8N9N5-2</id>
    </interactant>
    <interactant intactId="EBI-11742507">
        <id>Q8TAP4-4</id>
        <label>LMO3</label>
    </interactant>
    <organismsDiffer>false</organismsDiffer>
    <experiments>6</experiments>
</comment>
<comment type="interaction">
    <interactant intactId="EBI-11524452">
        <id>Q8N9N5-2</id>
    </interactant>
    <interactant intactId="EBI-2798728">
        <id>P61968</id>
        <label>LMO4</label>
    </interactant>
    <organismsDiffer>false</organismsDiffer>
    <experiments>3</experiments>
</comment>
<comment type="interaction">
    <interactant intactId="EBI-11524452">
        <id>Q8N9N5-2</id>
    </interactant>
    <interactant intactId="EBI-473196">
        <id>Q5T3J3</id>
        <label>LRIF1</label>
    </interactant>
    <organismsDiffer>false</organismsDiffer>
    <experiments>3</experiments>
</comment>
<comment type="interaction">
    <interactant intactId="EBI-11524452">
        <id>Q8N9N5-2</id>
    </interactant>
    <interactant intactId="EBI-492564">
        <id>Q02750</id>
        <label>MAP2K1</label>
    </interactant>
    <organismsDiffer>false</organismsDiffer>
    <experiments>3</experiments>
</comment>
<comment type="interaction">
    <interactant intactId="EBI-11524452">
        <id>Q8N9N5-2</id>
    </interactant>
    <interactant intactId="EBI-724076">
        <id>Q99750</id>
        <label>MDFI</label>
    </interactant>
    <organismsDiffer>false</organismsDiffer>
    <experiments>6</experiments>
</comment>
<comment type="interaction">
    <interactant intactId="EBI-11524452">
        <id>Q8N9N5-2</id>
    </interactant>
    <interactant intactId="EBI-2864512">
        <id>P50221</id>
        <label>MEOX1</label>
    </interactant>
    <organismsDiffer>false</organismsDiffer>
    <experiments>3</experiments>
</comment>
<comment type="interaction">
    <interactant intactId="EBI-11524452">
        <id>Q8N9N5-2</id>
    </interactant>
    <interactant intactId="EBI-16439278">
        <id>Q6FHY5</id>
        <label>MEOX2</label>
    </interactant>
    <organismsDiffer>false</organismsDiffer>
    <experiments>3</experiments>
</comment>
<comment type="interaction">
    <interactant intactId="EBI-11524452">
        <id>Q8N9N5-2</id>
    </interactant>
    <interactant intactId="EBI-2855755">
        <id>Q96E11</id>
        <label>MRRF</label>
    </interactant>
    <organismsDiffer>false</organismsDiffer>
    <experiments>3</experiments>
</comment>
<comment type="interaction">
    <interactant intactId="EBI-11524452">
        <id>Q8N9N5-2</id>
    </interactant>
    <interactant intactId="EBI-10699187">
        <id>Q8IXL7-2</id>
        <label>MSRB3</label>
    </interactant>
    <organismsDiffer>false</organismsDiffer>
    <experiments>3</experiments>
</comment>
<comment type="interaction">
    <interactant intactId="EBI-11524452">
        <id>Q8N9N5-2</id>
    </interactant>
    <interactant intactId="EBI-948435">
        <id>Q7Z6M4</id>
        <label>MTERF4</label>
    </interactant>
    <organismsDiffer>false</organismsDiffer>
    <experiments>3</experiments>
</comment>
<comment type="interaction">
    <interactant intactId="EBI-11524452">
        <id>Q8N9N5-2</id>
    </interactant>
    <interactant intactId="EBI-11746523">
        <id>Q14511-2</id>
        <label>NEDD9</label>
    </interactant>
    <organismsDiffer>false</organismsDiffer>
    <experiments>3</experiments>
</comment>
<comment type="interaction">
    <interactant intactId="EBI-11524452">
        <id>Q8N9N5-2</id>
    </interactant>
    <interactant intactId="EBI-11061759">
        <id>P23511-2</id>
        <label>NFYA</label>
    </interactant>
    <organismsDiffer>false</organismsDiffer>
    <experiments>3</experiments>
</comment>
<comment type="interaction">
    <interactant intactId="EBI-11524452">
        <id>Q8N9N5-2</id>
    </interactant>
    <interactant intactId="EBI-3917542">
        <id>Q9HAN9</id>
        <label>NMNAT1</label>
    </interactant>
    <organismsDiffer>false</organismsDiffer>
    <experiments>7</experiments>
</comment>
<comment type="interaction">
    <interactant intactId="EBI-11524452">
        <id>Q8N9N5-2</id>
    </interactant>
    <interactant intactId="EBI-17490746">
        <id>A8MTQ0</id>
        <label>NOTO</label>
    </interactant>
    <organismsDiffer>false</organismsDiffer>
    <experiments>3</experiments>
</comment>
<comment type="interaction">
    <interactant intactId="EBI-11524452">
        <id>Q8N9N5-2</id>
    </interactant>
    <interactant intactId="EBI-3913975">
        <id>Q9BQI9</id>
        <label>NRIP2</label>
    </interactant>
    <organismsDiffer>false</organismsDiffer>
    <experiments>3</experiments>
</comment>
<comment type="interaction">
    <interactant intactId="EBI-11524452">
        <id>Q8N9N5-2</id>
    </interactant>
    <interactant intactId="EBI-17242559">
        <id>Q495U3</id>
        <label>PANX2</label>
    </interactant>
    <organismsDiffer>false</organismsDiffer>
    <experiments>3</experiments>
</comment>
<comment type="interaction">
    <interactant intactId="EBI-11524452">
        <id>Q8N9N5-2</id>
    </interactant>
    <interactant intactId="EBI-295391">
        <id>Q9BYG5</id>
        <label>PARD6B</label>
    </interactant>
    <organismsDiffer>false</organismsDiffer>
    <experiments>3</experiments>
</comment>
<comment type="interaction">
    <interactant intactId="EBI-11524452">
        <id>Q8N9N5-2</id>
    </interactant>
    <interactant intactId="EBI-747278">
        <id>P26367</id>
        <label>PAX6</label>
    </interactant>
    <organismsDiffer>false</organismsDiffer>
    <experiments>3</experiments>
</comment>
<comment type="interaction">
    <interactant intactId="EBI-11524452">
        <id>Q8N9N5-2</id>
    </interactant>
    <interactant intactId="EBI-745085">
        <id>Q96BD5</id>
        <label>PHF21A</label>
    </interactant>
    <organismsDiffer>false</organismsDiffer>
    <experiments>4</experiments>
</comment>
<comment type="interaction">
    <interactant intactId="EBI-11524452">
        <id>Q8N9N5-2</id>
    </interactant>
    <interactant intactId="EBI-16434035">
        <id>A0A0S2Z615</id>
        <label>PHF21B</label>
    </interactant>
    <organismsDiffer>false</organismsDiffer>
    <experiments>3</experiments>
</comment>
<comment type="interaction">
    <interactant intactId="EBI-11524452">
        <id>Q8N9N5-2</id>
    </interactant>
    <interactant intactId="EBI-16437793">
        <id>Q96EK2-3</id>
        <label>PHF21B</label>
    </interactant>
    <organismsDiffer>false</organismsDiffer>
    <experiments>3</experiments>
</comment>
<comment type="interaction">
    <interactant intactId="EBI-11524452">
        <id>Q8N9N5-2</id>
    </interactant>
    <interactant intactId="EBI-10232538">
        <id>Q8WWB5</id>
        <label>PIH1D2</label>
    </interactant>
    <organismsDiffer>false</organismsDiffer>
    <experiments>3</experiments>
</comment>
<comment type="interaction">
    <interactant intactId="EBI-11524452">
        <id>Q8N9N5-2</id>
    </interactant>
    <interactant intactId="EBI-726549">
        <id>Q9NPJ4</id>
        <label>PNRC2</label>
    </interactant>
    <organismsDiffer>false</organismsDiffer>
    <experiments>3</experiments>
</comment>
<comment type="interaction">
    <interactant intactId="EBI-11524452">
        <id>Q8N9N5-2</id>
    </interactant>
    <interactant intactId="EBI-1389308">
        <id>Q7Z3K3</id>
        <label>POGZ</label>
    </interactant>
    <organismsDiffer>false</organismsDiffer>
    <experiments>10</experiments>
</comment>
<comment type="interaction">
    <interactant intactId="EBI-11524452">
        <id>Q8N9N5-2</id>
    </interactant>
    <interactant intactId="EBI-12029004">
        <id>P78424</id>
        <label>POU6F2</label>
    </interactant>
    <organismsDiffer>false</organismsDiffer>
    <experiments>3</experiments>
</comment>
<comment type="interaction">
    <interactant intactId="EBI-11524452">
        <id>Q8N9N5-2</id>
    </interactant>
    <interactant intactId="EBI-953909">
        <id>P45877</id>
        <label>PPIC</label>
    </interactant>
    <organismsDiffer>false</organismsDiffer>
    <experiments>3</experiments>
</comment>
<comment type="interaction">
    <interactant intactId="EBI-11524452">
        <id>Q8N9N5-2</id>
    </interactant>
    <interactant intactId="EBI-11320284">
        <id>Q9NQX0</id>
        <label>PRDM6</label>
    </interactant>
    <organismsDiffer>false</organismsDiffer>
    <experiments>3</experiments>
</comment>
<comment type="interaction">
    <interactant intactId="EBI-11524452">
        <id>Q8N9N5-2</id>
    </interactant>
    <interactant intactId="EBI-1053424">
        <id>O43741</id>
        <label>PRKAB2</label>
    </interactant>
    <organismsDiffer>false</organismsDiffer>
    <experiments>5</experiments>
</comment>
<comment type="interaction">
    <interactant intactId="EBI-11524452">
        <id>Q8N9N5-2</id>
    </interactant>
    <interactant intactId="EBI-1383528">
        <id>P17252</id>
        <label>PRKCA</label>
    </interactant>
    <organismsDiffer>false</organismsDiffer>
    <experiments>3</experiments>
</comment>
<comment type="interaction">
    <interactant intactId="EBI-11524452">
        <id>Q8N9N5-2</id>
    </interactant>
    <interactant intactId="EBI-12754095">
        <id>P86480</id>
        <label>PRR20D</label>
    </interactant>
    <organismsDiffer>false</organismsDiffer>
    <experiments>3</experiments>
</comment>
<comment type="interaction">
    <interactant intactId="EBI-11524452">
        <id>Q8N9N5-2</id>
    </interactant>
    <interactant intactId="EBI-12845180">
        <id>Q6ZRT6</id>
        <label>PRR23B</label>
    </interactant>
    <organismsDiffer>false</organismsDiffer>
    <experiments>3</experiments>
</comment>
<comment type="interaction">
    <interactant intactId="EBI-11524452">
        <id>Q8N9N5-2</id>
    </interactant>
    <interactant intactId="EBI-11959565">
        <id>Q9NV39</id>
        <label>PRR34</label>
    </interactant>
    <organismsDiffer>false</organismsDiffer>
    <experiments>3</experiments>
</comment>
<comment type="interaction">
    <interactant intactId="EBI-11524452">
        <id>Q8N9N5-2</id>
    </interactant>
    <interactant intactId="EBI-11974061">
        <id>Q9UIG4</id>
        <label>PSORS1C2</label>
    </interactant>
    <organismsDiffer>false</organismsDiffer>
    <experiments>3</experiments>
</comment>
<comment type="interaction">
    <interactant intactId="EBI-11524452">
        <id>Q8N9N5-2</id>
    </interactant>
    <interactant intactId="EBI-11984839">
        <id>Q96QF0-7</id>
        <label>RAB3IP</label>
    </interactant>
    <organismsDiffer>false</organismsDiffer>
    <experiments>6</experiments>
</comment>
<comment type="interaction">
    <interactant intactId="EBI-11524452">
        <id>Q8N9N5-2</id>
    </interactant>
    <interactant intactId="EBI-948156">
        <id>Q9Y4B4</id>
        <label>RAD54L2</label>
    </interactant>
    <organismsDiffer>false</organismsDiffer>
    <experiments>3</experiments>
</comment>
<comment type="interaction">
    <interactant intactId="EBI-11524452">
        <id>Q8N9N5-2</id>
    </interactant>
    <interactant intactId="EBI-10829018">
        <id>Q04864-2</id>
        <label>REL</label>
    </interactant>
    <organismsDiffer>false</organismsDiffer>
    <experiments>6</experiments>
</comment>
<comment type="interaction">
    <interactant intactId="EBI-11524452">
        <id>Q8N9N5-2</id>
    </interactant>
    <interactant intactId="EBI-10489476">
        <id>Q96CP1</id>
        <label>RELA</label>
    </interactant>
    <organismsDiffer>false</organismsDiffer>
    <experiments>3</experiments>
</comment>
<comment type="interaction">
    <interactant intactId="EBI-11524452">
        <id>Q8N9N5-2</id>
    </interactant>
    <interactant intactId="EBI-9658624">
        <id>Q9BSD3</id>
        <label>RHNO1</label>
    </interactant>
    <organismsDiffer>false</organismsDiffer>
    <experiments>3</experiments>
</comment>
<comment type="interaction">
    <interactant intactId="EBI-11524452">
        <id>Q8N9N5-2</id>
    </interactant>
    <interactant intactId="EBI-1244971">
        <id>Q15669</id>
        <label>RHOH</label>
    </interactant>
    <organismsDiffer>false</organismsDiffer>
    <experiments>3</experiments>
</comment>
<comment type="interaction">
    <interactant intactId="EBI-11524452">
        <id>Q8N9N5-2</id>
    </interactant>
    <interactant intactId="EBI-689202">
        <id>P17081</id>
        <label>RHOQ</label>
    </interactant>
    <organismsDiffer>false</organismsDiffer>
    <experiments>3</experiments>
</comment>
<comment type="interaction">
    <interactant intactId="EBI-11524452">
        <id>Q8N9N5-2</id>
    </interactant>
    <interactant intactId="EBI-1045080">
        <id>P52758</id>
        <label>RIDA</label>
    </interactant>
    <organismsDiffer>false</organismsDiffer>
    <experiments>3</experiments>
</comment>
<comment type="interaction">
    <interactant intactId="EBI-11524452">
        <id>Q8N9N5-2</id>
    </interactant>
    <interactant intactId="EBI-366570">
        <id>Q9BUL9</id>
        <label>RPP25</label>
    </interactant>
    <organismsDiffer>false</organismsDiffer>
    <experiments>3</experiments>
</comment>
<comment type="interaction">
    <interactant intactId="EBI-11524452">
        <id>Q8N9N5-2</id>
    </interactant>
    <interactant intactId="EBI-752324">
        <id>Q8N488</id>
        <label>RYBP</label>
    </interactant>
    <organismsDiffer>false</organismsDiffer>
    <experiments>3</experiments>
</comment>
<comment type="interaction">
    <interactant intactId="EBI-11524452">
        <id>Q8N9N5-2</id>
    </interactant>
    <interactant intactId="EBI-13072754">
        <id>Q5SSQ6-2</id>
        <label>SAPCD1</label>
    </interactant>
    <organismsDiffer>false</organismsDiffer>
    <experiments>3</experiments>
</comment>
<comment type="interaction">
    <interactant intactId="EBI-11524452">
        <id>Q8N9N5-2</id>
    </interactant>
    <interactant intactId="EBI-14276801">
        <id>Q14524-3</id>
        <label>SCN5A</label>
    </interactant>
    <organismsDiffer>false</organismsDiffer>
    <experiments>3</experiments>
</comment>
<comment type="interaction">
    <interactant intactId="EBI-11524452">
        <id>Q8N9N5-2</id>
    </interactant>
    <interactant intactId="EBI-9090795">
        <id>Q15047-2</id>
        <label>SETDB1</label>
    </interactant>
    <organismsDiffer>false</organismsDiffer>
    <experiments>3</experiments>
</comment>
<comment type="interaction">
    <interactant intactId="EBI-11524452">
        <id>Q8N9N5-2</id>
    </interactant>
    <interactant intactId="EBI-18232868">
        <id>Q53S99</id>
        <label>SLC19A4P</label>
    </interactant>
    <organismsDiffer>false</organismsDiffer>
    <experiments>3</experiments>
</comment>
<comment type="interaction">
    <interactant intactId="EBI-11524452">
        <id>Q8N9N5-2</id>
    </interactant>
    <interactant intactId="EBI-296723">
        <id>O95295</id>
        <label>SNAPIN</label>
    </interactant>
    <organismsDiffer>false</organismsDiffer>
    <experiments>3</experiments>
</comment>
<comment type="interaction">
    <interactant intactId="EBI-11524452">
        <id>Q8N9N5-2</id>
    </interactant>
    <interactant intactId="EBI-372475">
        <id>P14678-2</id>
        <label>SNRPB</label>
    </interactant>
    <organismsDiffer>false</organismsDiffer>
    <experiments>3</experiments>
</comment>
<comment type="interaction">
    <interactant intactId="EBI-11524452">
        <id>Q8N9N5-2</id>
    </interactant>
    <interactant intactId="EBI-12229025">
        <id>Q9Y5X3-2</id>
        <label>SNX5</label>
    </interactant>
    <organismsDiffer>false</organismsDiffer>
    <experiments>3</experiments>
</comment>
<comment type="interaction">
    <interactant intactId="EBI-11524452">
        <id>Q8N9N5-2</id>
    </interactant>
    <interactant intactId="EBI-9088579">
        <id>Q02086-2</id>
        <label>SP2</label>
    </interactant>
    <organismsDiffer>false</organismsDiffer>
    <experiments>3</experiments>
</comment>
<comment type="interaction">
    <interactant intactId="EBI-11524452">
        <id>Q8N9N5-2</id>
    </interactant>
    <interactant intactId="EBI-10198587">
        <id>Q02446</id>
        <label>SP4</label>
    </interactant>
    <organismsDiffer>false</organismsDiffer>
    <experiments>3</experiments>
</comment>
<comment type="interaction">
    <interactant intactId="EBI-11524452">
        <id>Q8N9N5-2</id>
    </interactant>
    <interactant intactId="EBI-12023934">
        <id>Q5MJ10</id>
        <label>SPANXN2</label>
    </interactant>
    <organismsDiffer>false</organismsDiffer>
    <experiments>3</experiments>
</comment>
<comment type="interaction">
    <interactant intactId="EBI-11524452">
        <id>Q8N9N5-2</id>
    </interactant>
    <interactant intactId="EBI-12020542">
        <id>Q96LM5</id>
        <label>SPMIP2</label>
    </interactant>
    <organismsDiffer>false</organismsDiffer>
    <experiments>3</experiments>
</comment>
<comment type="interaction">
    <interactant intactId="EBI-11524452">
        <id>Q8N9N5-2</id>
    </interactant>
    <interactant intactId="EBI-17858294">
        <id>Q8NEQ6</id>
        <label>SRARP</label>
    </interactant>
    <organismsDiffer>false</organismsDiffer>
    <experiments>3</experiments>
</comment>
<comment type="interaction">
    <interactant intactId="EBI-11524452">
        <id>Q8N9N5-2</id>
    </interactant>
    <interactant intactId="EBI-458376">
        <id>Q15208</id>
        <label>STK38</label>
    </interactant>
    <organismsDiffer>false</organismsDiffer>
    <experiments>3</experiments>
</comment>
<comment type="interaction">
    <interactant intactId="EBI-11524452">
        <id>Q8N9N5-2</id>
    </interactant>
    <interactant intactId="EBI-3923644">
        <id>Q6ZVD7</id>
        <label>STOX1</label>
    </interactant>
    <organismsDiffer>false</organismsDiffer>
    <experiments>3</experiments>
</comment>
<comment type="interaction">
    <interactant intactId="EBI-11524452">
        <id>Q8N9N5-2</id>
    </interactant>
    <interactant intactId="EBI-12940148">
        <id>P49848-3</id>
        <label>TAF6</label>
    </interactant>
    <organismsDiffer>false</organismsDiffer>
    <experiments>3</experiments>
</comment>
<comment type="interaction">
    <interactant intactId="EBI-11524452">
        <id>Q8N9N5-2</id>
    </interactant>
    <interactant intactId="EBI-20753895">
        <id>P22105-1</id>
        <label>TNXB</label>
    </interactant>
    <organismsDiffer>false</organismsDiffer>
    <experiments>3</experiments>
</comment>
<comment type="interaction">
    <interactant intactId="EBI-11524452">
        <id>Q8N9N5-2</id>
    </interactant>
    <interactant intactId="EBI-9088321">
        <id>O94900</id>
        <label>TOX</label>
    </interactant>
    <organismsDiffer>false</organismsDiffer>
    <experiments>3</experiments>
</comment>
<comment type="interaction">
    <interactant intactId="EBI-11524452">
        <id>Q8N9N5-2</id>
    </interactant>
    <interactant intactId="EBI-948613">
        <id>O94842</id>
        <label>TOX4</label>
    </interactant>
    <organismsDiffer>false</organismsDiffer>
    <experiments>6</experiments>
</comment>
<comment type="interaction">
    <interactant intactId="EBI-11524452">
        <id>Q8N9N5-2</id>
    </interactant>
    <interactant intactId="EBI-355744">
        <id>Q12933</id>
        <label>TRAF2</label>
    </interactant>
    <organismsDiffer>false</organismsDiffer>
    <experiments>3</experiments>
</comment>
<comment type="interaction">
    <interactant intactId="EBI-11524452">
        <id>Q8N9N5-2</id>
    </interactant>
    <interactant intactId="EBI-3650647">
        <id>Q9BUZ4</id>
        <label>TRAF4</label>
    </interactant>
    <organismsDiffer>false</organismsDiffer>
    <experiments>6</experiments>
</comment>
<comment type="interaction">
    <interactant intactId="EBI-11524452">
        <id>Q8N9N5-2</id>
    </interactant>
    <interactant intactId="EBI-17716262">
        <id>Q9UPQ4-2</id>
        <label>TRIM35</label>
    </interactant>
    <organismsDiffer>false</organismsDiffer>
    <experiments>3</experiments>
</comment>
<comment type="interaction">
    <interactant intactId="EBI-11524452">
        <id>Q8N9N5-2</id>
    </interactant>
    <interactant intactId="EBI-9090990">
        <id>Q5W5X9-3</id>
        <label>TTC23</label>
    </interactant>
    <organismsDiffer>false</organismsDiffer>
    <experiments>3</experiments>
</comment>
<comment type="interaction">
    <interactant intactId="EBI-11524452">
        <id>Q8N9N5-2</id>
    </interactant>
    <interactant intactId="EBI-2514383">
        <id>Q5T6F2</id>
        <label>UBAP2</label>
    </interactant>
    <organismsDiffer>false</organismsDiffer>
    <experiments>3</experiments>
</comment>
<comment type="interaction">
    <interactant intactId="EBI-11524452">
        <id>Q8N9N5-2</id>
    </interactant>
    <interactant intactId="EBI-10180829">
        <id>Q7KZS0</id>
        <label>UBE2I</label>
    </interactant>
    <organismsDiffer>false</organismsDiffer>
    <experiments>3</experiments>
</comment>
<comment type="interaction">
    <interactant intactId="EBI-11524452">
        <id>Q8N9N5-2</id>
    </interactant>
    <interactant intactId="EBI-11980193">
        <id>Q14119</id>
        <label>VEZF1</label>
    </interactant>
    <organismsDiffer>false</organismsDiffer>
    <experiments>3</experiments>
</comment>
<comment type="interaction">
    <interactant intactId="EBI-11524452">
        <id>Q8N9N5-2</id>
    </interactant>
    <interactant intactId="EBI-2803134">
        <id>Q2NL98</id>
        <label>VMAC</label>
    </interactant>
    <organismsDiffer>false</organismsDiffer>
    <experiments>4</experiments>
</comment>
<comment type="interaction">
    <interactant intactId="EBI-11524452">
        <id>Q8N9N5-2</id>
    </interactant>
    <interactant intactId="EBI-10300345">
        <id>Q9BW85</id>
        <label>YJU2</label>
    </interactant>
    <organismsDiffer>false</organismsDiffer>
    <experiments>3</experiments>
</comment>
<comment type="interaction">
    <interactant intactId="EBI-11524452">
        <id>Q8N9N5-2</id>
    </interactant>
    <interactant intactId="EBI-359832">
        <id>P61981</id>
        <label>YWHAG</label>
    </interactant>
    <organismsDiffer>false</organismsDiffer>
    <experiments>3</experiments>
</comment>
<comment type="interaction">
    <interactant intactId="EBI-11524452">
        <id>Q8N9N5-2</id>
    </interactant>
    <interactant intactId="EBI-2564133">
        <id>Q9P1Z0</id>
        <label>ZBTB4</label>
    </interactant>
    <organismsDiffer>false</organismsDiffer>
    <experiments>3</experiments>
</comment>
<comment type="interaction">
    <interactant intactId="EBI-11524452">
        <id>Q8N9N5-2</id>
    </interactant>
    <interactant intactId="EBI-745786">
        <id>Q8NF64</id>
        <label>ZMIZ2</label>
    </interactant>
    <organismsDiffer>false</organismsDiffer>
    <experiments>3</experiments>
</comment>
<comment type="interaction">
    <interactant intactId="EBI-11524452">
        <id>Q8N9N5-2</id>
    </interactant>
    <interactant intactId="EBI-12949277">
        <id>O95789-4</id>
        <label>ZMYM6</label>
    </interactant>
    <organismsDiffer>false</organismsDiffer>
    <experiments>3</experiments>
</comment>
<comment type="interaction">
    <interactant intactId="EBI-11524452">
        <id>Q8N9N5-2</id>
    </interactant>
    <interactant intactId="EBI-11741890">
        <id>Q86VK4-3</id>
        <label>ZNF410</label>
    </interactant>
    <organismsDiffer>false</organismsDiffer>
    <experiments>3</experiments>
</comment>
<comment type="interaction">
    <interactant intactId="EBI-11524452">
        <id>Q8N9N5-2</id>
    </interactant>
    <interactant intactId="EBI-11962468">
        <id>Q7Z4V0</id>
        <label>ZNF438</label>
    </interactant>
    <organismsDiffer>false</organismsDiffer>
    <experiments>3</experiments>
</comment>
<comment type="interaction">
    <interactant intactId="EBI-11524452">
        <id>Q8N9N5-2</id>
    </interactant>
    <interactant intactId="EBI-17269964">
        <id>Q6S9Z5</id>
        <label>ZNF474</label>
    </interactant>
    <organismsDiffer>false</organismsDiffer>
    <experiments>3</experiments>
</comment>
<comment type="interaction">
    <interactant intactId="EBI-11524452">
        <id>Q8N9N5-2</id>
    </interactant>
    <interactant intactId="EBI-1049952">
        <id>Q96KM6</id>
        <label>ZNF512B</label>
    </interactant>
    <organismsDiffer>false</organismsDiffer>
    <experiments>3</experiments>
</comment>
<comment type="interaction">
    <interactant intactId="EBI-11524452">
        <id>Q8N9N5-2</id>
    </interactant>
    <interactant intactId="EBI-746277">
        <id>Q9UK33</id>
        <label>ZNF580</label>
    </interactant>
    <organismsDiffer>false</organismsDiffer>
    <experiments>3</experiments>
</comment>
<comment type="interaction">
    <interactant intactId="EBI-11524452">
        <id>Q8N9N5-2</id>
    </interactant>
    <interactant intactId="EBI-745520">
        <id>Q9P0T4</id>
        <label>ZNF581</label>
    </interactant>
    <organismsDiffer>false</organismsDiffer>
    <experiments>3</experiments>
</comment>
<comment type="interaction">
    <interactant intactId="EBI-11524452">
        <id>Q8N9N5-2</id>
    </interactant>
    <interactant intactId="EBI-17234977">
        <id>A0A1U9X8X8</id>
    </interactant>
    <organismsDiffer>false</organismsDiffer>
    <experiments>3</experiments>
</comment>
<comment type="interaction">
    <interactant intactId="EBI-16429296">
        <id>Q8N9N5-7</id>
    </interactant>
    <interactant intactId="EBI-11524452">
        <id>Q8N9N5-2</id>
        <label>BANP</label>
    </interactant>
    <organismsDiffer>false</organismsDiffer>
    <experiments>3</experiments>
</comment>
<comment type="interaction">
    <interactant intactId="EBI-16429296">
        <id>Q8N9N5-7</id>
    </interactant>
    <interactant intactId="EBI-10181162">
        <id>O14627</id>
        <label>CDX4</label>
    </interactant>
    <organismsDiffer>false</organismsDiffer>
    <experiments>3</experiments>
</comment>
<comment type="interaction">
    <interactant intactId="EBI-16429296">
        <id>Q8N9N5-7</id>
    </interactant>
    <interactant intactId="EBI-742887">
        <id>Q8TAP6</id>
        <label>CEP76</label>
    </interactant>
    <organismsDiffer>false</organismsDiffer>
    <experiments>3</experiments>
</comment>
<comment type="interaction">
    <interactant intactId="EBI-16429296">
        <id>Q8N9N5-7</id>
    </interactant>
    <interactant intactId="EBI-748171">
        <id>O43186</id>
        <label>CRX</label>
    </interactant>
    <organismsDiffer>false</organismsDiffer>
    <experiments>3</experiments>
</comment>
<comment type="interaction">
    <interactant intactId="EBI-16429296">
        <id>Q8N9N5-7</id>
    </interactant>
    <interactant intactId="EBI-3908248">
        <id>O60479</id>
        <label>DLX3</label>
    </interactant>
    <organismsDiffer>false</organismsDiffer>
    <experiments>3</experiments>
</comment>
<comment type="interaction">
    <interactant intactId="EBI-16429296">
        <id>Q8N9N5-7</id>
    </interactant>
    <interactant intactId="EBI-701903">
        <id>Q14192</id>
        <label>FHL2</label>
    </interactant>
    <organismsDiffer>false</organismsDiffer>
    <experiments>3</experiments>
</comment>
<comment type="interaction">
    <interactant intactId="EBI-16429296">
        <id>Q8N9N5-7</id>
    </interactant>
    <interactant intactId="EBI-750641">
        <id>Q5TD97</id>
        <label>FHL5</label>
    </interactant>
    <organismsDiffer>false</organismsDiffer>
    <experiments>3</experiments>
</comment>
<comment type="interaction">
    <interactant intactId="EBI-16429296">
        <id>Q8N9N5-7</id>
    </interactant>
    <interactant intactId="EBI-866480">
        <id>Q08050</id>
        <label>FOXM1</label>
    </interactant>
    <organismsDiffer>false</organismsDiffer>
    <experiments>3</experiments>
</comment>
<comment type="interaction">
    <interactant intactId="EBI-16429296">
        <id>Q8N9N5-7</id>
    </interactant>
    <interactant intactId="EBI-5237510">
        <id>Q08050-2</id>
        <label>FOXM1</label>
    </interactant>
    <organismsDiffer>false</organismsDiffer>
    <experiments>3</experiments>
</comment>
<comment type="interaction">
    <interactant intactId="EBI-16429296">
        <id>Q8N9N5-7</id>
    </interactant>
    <interactant intactId="EBI-3957665">
        <id>Q96LI6</id>
        <label>HSFY2</label>
    </interactant>
    <organismsDiffer>false</organismsDiffer>
    <experiments>3</experiments>
</comment>
<comment type="interaction">
    <interactant intactId="EBI-16429296">
        <id>Q8N9N5-7</id>
    </interactant>
    <interactant intactId="EBI-724076">
        <id>Q99750</id>
        <label>MDFI</label>
    </interactant>
    <organismsDiffer>false</organismsDiffer>
    <experiments>3</experiments>
</comment>
<comment type="interaction">
    <interactant intactId="EBI-16429296">
        <id>Q8N9N5-7</id>
    </interactant>
    <interactant intactId="EBI-2864512">
        <id>P50221</id>
        <label>MEOX1</label>
    </interactant>
    <organismsDiffer>false</organismsDiffer>
    <experiments>3</experiments>
</comment>
<comment type="interaction">
    <interactant intactId="EBI-16429296">
        <id>Q8N9N5-7</id>
    </interactant>
    <interactant intactId="EBI-16439278">
        <id>Q6FHY5</id>
        <label>MEOX2</label>
    </interactant>
    <organismsDiffer>false</organismsDiffer>
    <experiments>3</experiments>
</comment>
<comment type="interaction">
    <interactant intactId="EBI-16429296">
        <id>Q8N9N5-7</id>
    </interactant>
    <interactant intactId="EBI-1389308">
        <id>Q7Z3K3</id>
        <label>POGZ</label>
    </interactant>
    <organismsDiffer>false</organismsDiffer>
    <experiments>3</experiments>
</comment>
<comment type="interaction">
    <interactant intactId="EBI-16429296">
        <id>Q8N9N5-7</id>
    </interactant>
    <interactant intactId="EBI-12700196">
        <id>P86478</id>
        <label>PRR20E</label>
    </interactant>
    <organismsDiffer>false</organismsDiffer>
    <experiments>3</experiments>
</comment>
<comment type="interaction">
    <interactant intactId="EBI-16429296">
        <id>Q8N9N5-7</id>
    </interactant>
    <interactant intactId="EBI-11984839">
        <id>Q96QF0-7</id>
        <label>RAB3IP</label>
    </interactant>
    <organismsDiffer>false</organismsDiffer>
    <experiments>3</experiments>
</comment>
<comment type="interaction">
    <interactant intactId="EBI-16429296">
        <id>Q8N9N5-7</id>
    </interactant>
    <interactant intactId="EBI-10829018">
        <id>Q04864-2</id>
        <label>REL</label>
    </interactant>
    <organismsDiffer>false</organismsDiffer>
    <experiments>3</experiments>
</comment>
<comment type="interaction">
    <interactant intactId="EBI-16429296">
        <id>Q8N9N5-7</id>
    </interactant>
    <interactant intactId="EBI-10198587">
        <id>Q02446</id>
        <label>SP4</label>
    </interactant>
    <organismsDiffer>false</organismsDiffer>
    <experiments>3</experiments>
</comment>
<comment type="interaction">
    <interactant intactId="EBI-16429296">
        <id>Q8N9N5-7</id>
    </interactant>
    <interactant intactId="EBI-948613">
        <id>O94842</id>
        <label>TOX4</label>
    </interactant>
    <organismsDiffer>false</organismsDiffer>
    <experiments>3</experiments>
</comment>
<comment type="interaction">
    <interactant intactId="EBI-16429296">
        <id>Q8N9N5-7</id>
    </interactant>
    <interactant intactId="EBI-355744">
        <id>Q12933</id>
        <label>TRAF2</label>
    </interactant>
    <organismsDiffer>false</organismsDiffer>
    <experiments>3</experiments>
</comment>
<comment type="interaction">
    <interactant intactId="EBI-16429296">
        <id>Q8N9N5-7</id>
    </interactant>
    <interactant intactId="EBI-3650647">
        <id>Q9BUZ4</id>
        <label>TRAF4</label>
    </interactant>
    <organismsDiffer>false</organismsDiffer>
    <experiments>3</experiments>
</comment>
<comment type="interaction">
    <interactant intactId="EBI-16429296">
        <id>Q8N9N5-7</id>
    </interactant>
    <interactant intactId="EBI-745786">
        <id>Q8NF64</id>
        <label>ZMIZ2</label>
    </interactant>
    <organismsDiffer>false</organismsDiffer>
    <experiments>3</experiments>
</comment>
<comment type="subcellular location">
    <subcellularLocation>
        <location evidence="6 7">Nucleus</location>
    </subcellularLocation>
    <subcellularLocation>
        <location evidence="7">Nucleus speckle</location>
    </subcellularLocation>
    <subcellularLocation>
        <location evidence="7">Cytoplasm</location>
    </subcellularLocation>
    <text evidence="7">Primarily nuclear but translocates to the cytoplasm following MAPK1/MAPK3-mediated phosphorylation.</text>
</comment>
<comment type="alternative products">
    <event type="alternative splicing"/>
    <isoform>
        <id>Q8N9N5-1</id>
        <name>1</name>
        <sequence type="displayed"/>
    </isoform>
    <isoform>
        <id>Q8N9N5-2</id>
        <name>2</name>
        <sequence type="described" ref="VSP_027399 VSP_027400 VSP_027401 VSP_027402"/>
    </isoform>
    <isoform>
        <id>Q8N9N5-3</id>
        <name>3</name>
        <sequence type="described" ref="VSP_027396 VSP_027398 VSP_027399 VSP_027400 VSP_027402"/>
    </isoform>
    <isoform>
        <id>Q8N9N5-4</id>
        <name>4</name>
        <sequence type="described" ref="VSP_027399 VSP_027400 VSP_027401"/>
    </isoform>
    <isoform>
        <id>Q8N9N5-5</id>
        <name>5</name>
        <sequence type="described" ref="VSP_043558 VSP_027399 VSP_027400 VSP_027401"/>
    </isoform>
    <isoform>
        <id>Q8N9N5-6</id>
        <name>6</name>
        <sequence type="described" ref="VSP_027399 VSP_027400 VSP_027402"/>
    </isoform>
    <isoform>
        <id>Q8N9N5-7</id>
        <name>7</name>
        <sequence type="described" ref="VSP_027399 VSP_027401 VSP_027402"/>
    </isoform>
</comment>
<comment type="tissue specificity">
    <text evidence="6">Down-regulated in breast cancer cell lines.</text>
</comment>
<comment type="PTM">
    <text evidence="2">MAPK1/MAPK3-mediated phosphorylation at Thr-337 and Thr-352 results in export to the cytoplasm.</text>
</comment>
<comment type="similarity">
    <text evidence="10">Belongs to the BANP/SMAR1 family.</text>
</comment>
<comment type="sequence caution" evidence="10">
    <conflict type="erroneous initiation">
        <sequence resource="EMBL-CDS" id="BAC04296"/>
    </conflict>
    <text>Extended N-terminus.</text>
</comment>